<keyword id="KW-0002">3D-structure</keyword>
<keyword id="KW-0025">Alternative splicing</keyword>
<keyword id="KW-0106">Calcium</keyword>
<keyword id="KW-0223">Dioxygenase</keyword>
<keyword id="KW-0225">Disease variant</keyword>
<keyword id="KW-1015">Disulfide bond</keyword>
<keyword id="KW-0256">Endoplasmic reticulum</keyword>
<keyword id="KW-0325">Glycoprotein</keyword>
<keyword id="KW-0408">Iron</keyword>
<keyword id="KW-0472">Membrane</keyword>
<keyword id="KW-0479">Metal-binding</keyword>
<keyword id="KW-0560">Oxidoreductase</keyword>
<keyword id="KW-0597">Phosphoprotein</keyword>
<keyword id="KW-1267">Proteomics identification</keyword>
<keyword id="KW-1185">Reference proteome</keyword>
<keyword id="KW-0677">Repeat</keyword>
<keyword id="KW-0703">Sarcoplasmic reticulum</keyword>
<keyword id="KW-0735">Signal-anchor</keyword>
<keyword id="KW-0802">TPR repeat</keyword>
<keyword id="KW-0812">Transmembrane</keyword>
<keyword id="KW-1133">Transmembrane helix</keyword>
<comment type="function">
    <molecule>Isoform 1</molecule>
    <text evidence="5">Specifically hydroxylates an Asp or Asn residue in certain epidermal growth factor-like (EGF) domains of a number of proteins.</text>
</comment>
<comment type="function">
    <molecule>Isoform 8</molecule>
    <text evidence="7">Membrane-bound Ca(2+)-sensing protein, which is a structural component of the ER-plasma membrane junctions. Isoform 8 regulates the activity of Ca(+2) released-activated Ca(+2) (CRAC) channels in T-cells.</text>
</comment>
<comment type="catalytic activity">
    <reaction evidence="5">
        <text>L-aspartyl-[protein] + 2-oxoglutarate + O2 = 3-hydroxy-L-aspartyl-[protein] + succinate + CO2</text>
        <dbReference type="Rhea" id="RHEA:11508"/>
        <dbReference type="Rhea" id="RHEA-COMP:9867"/>
        <dbReference type="Rhea" id="RHEA-COMP:14951"/>
        <dbReference type="ChEBI" id="CHEBI:15379"/>
        <dbReference type="ChEBI" id="CHEBI:16526"/>
        <dbReference type="ChEBI" id="CHEBI:16810"/>
        <dbReference type="ChEBI" id="CHEBI:17427"/>
        <dbReference type="ChEBI" id="CHEBI:29961"/>
        <dbReference type="ChEBI" id="CHEBI:30031"/>
        <dbReference type="EC" id="1.14.11.16"/>
    </reaction>
</comment>
<comment type="cofactor">
    <cofactor evidence="1">
        <name>Fe cation</name>
        <dbReference type="ChEBI" id="CHEBI:24875"/>
    </cofactor>
</comment>
<comment type="subunit">
    <text evidence="1 6 7">Monomer (By similarity). Isoform 8 interacts with ORAI1 and STIM1. Isoform 4 interacts with CASQ2.</text>
</comment>
<comment type="interaction">
    <interactant intactId="EBI-2967294">
        <id>Q12797</id>
    </interactant>
    <interactant intactId="EBI-2515857">
        <id>O43681</id>
        <label>GET3</label>
    </interactant>
    <organismsDiffer>false</organismsDiffer>
    <experiments>3</experiments>
</comment>
<comment type="interaction">
    <interactant intactId="EBI-12092171">
        <id>Q12797-6</id>
    </interactant>
    <interactant intactId="EBI-712648">
        <id>O95994</id>
        <label>AGR2</label>
    </interactant>
    <organismsDiffer>false</organismsDiffer>
    <experiments>3</experiments>
</comment>
<comment type="interaction">
    <interactant intactId="EBI-12092171">
        <id>Q12797-6</id>
    </interactant>
    <interactant intactId="EBI-12927282">
        <id>P02818</id>
        <label>BGLAP</label>
    </interactant>
    <organismsDiffer>false</organismsDiffer>
    <experiments>3</experiments>
</comment>
<comment type="interaction">
    <interactant intactId="EBI-12092171">
        <id>Q12797-6</id>
    </interactant>
    <interactant intactId="EBI-1056240">
        <id>P01037</id>
        <label>CST1</label>
    </interactant>
    <organismsDiffer>false</organismsDiffer>
    <experiments>3</experiments>
</comment>
<comment type="interaction">
    <interactant intactId="EBI-12092171">
        <id>Q12797-6</id>
    </interactant>
    <interactant intactId="EBI-12823659">
        <id>Q5JRM2</id>
        <label>CXorf66</label>
    </interactant>
    <organismsDiffer>false</organismsDiffer>
    <experiments>3</experiments>
</comment>
<comment type="interaction">
    <interactant intactId="EBI-12092171">
        <id>Q12797-6</id>
    </interactant>
    <interactant intactId="EBI-395625">
        <id>P81605</id>
        <label>DCD</label>
    </interactant>
    <organismsDiffer>false</organismsDiffer>
    <experiments>3</experiments>
</comment>
<comment type="interaction">
    <interactant intactId="EBI-12092171">
        <id>Q12797-6</id>
    </interactant>
    <interactant intactId="EBI-7200390">
        <id>P60022</id>
        <label>DEFB1</label>
    </interactant>
    <organismsDiffer>false</organismsDiffer>
    <experiments>3</experiments>
</comment>
<comment type="interaction">
    <interactant intactId="EBI-12092171">
        <id>Q12797-6</id>
    </interactant>
    <interactant intactId="EBI-3923585">
        <id>Q8N5I4</id>
        <label>DHRSX</label>
    </interactant>
    <organismsDiffer>false</organismsDiffer>
    <experiments>3</experiments>
</comment>
<comment type="interaction">
    <interactant intactId="EBI-12092171">
        <id>Q12797-6</id>
    </interactant>
    <interactant intactId="EBI-356015">
        <id>Q14204</id>
        <label>DYNC1H1</label>
    </interactant>
    <organismsDiffer>false</organismsDiffer>
    <experiments>3</experiments>
</comment>
<comment type="interaction">
    <interactant intactId="EBI-12092171">
        <id>Q12797-6</id>
    </interactant>
    <interactant intactId="EBI-13382816">
        <id>Q6UWR7</id>
        <label>ENPP6</label>
    </interactant>
    <organismsDiffer>false</organismsDiffer>
    <experiments>3</experiments>
</comment>
<comment type="interaction">
    <interactant intactId="EBI-12092171">
        <id>Q12797-6</id>
    </interactant>
    <interactant intactId="EBI-12210457">
        <id>Q8NFU4</id>
        <label>FDCSP</label>
    </interactant>
    <organismsDiffer>false</organismsDiffer>
    <experiments>3</experiments>
</comment>
<comment type="interaction">
    <interactant intactId="EBI-12092171">
        <id>Q12797-6</id>
    </interactant>
    <interactant intactId="EBI-953742">
        <id>Q14512</id>
        <label>FGFBP1</label>
    </interactant>
    <organismsDiffer>false</organismsDiffer>
    <experiments>3</experiments>
</comment>
<comment type="interaction">
    <interactant intactId="EBI-12092171">
        <id>Q12797-6</id>
    </interactant>
    <interactant intactId="EBI-3918971">
        <id>Q9Y680</id>
        <label>FKBP7</label>
    </interactant>
    <organismsDiffer>false</organismsDiffer>
    <experiments>3</experiments>
</comment>
<comment type="interaction">
    <interactant intactId="EBI-12092171">
        <id>Q12797-6</id>
    </interactant>
    <interactant intactId="EBI-6624768">
        <id>P22466</id>
        <label>GAL</label>
    </interactant>
    <organismsDiffer>false</organismsDiffer>
    <experiments>3</experiments>
</comment>
<comment type="interaction">
    <interactant intactId="EBI-12092171">
        <id>Q12797-6</id>
    </interactant>
    <interactant intactId="EBI-3436637">
        <id>P01350</id>
        <label>GAST</label>
    </interactant>
    <organismsDiffer>false</organismsDiffer>
    <experiments>3</experiments>
</comment>
<comment type="interaction">
    <interactant intactId="EBI-12092171">
        <id>Q12797-6</id>
    </interactant>
    <interactant intactId="EBI-2515857">
        <id>O43681</id>
        <label>GET3</label>
    </interactant>
    <organismsDiffer>false</organismsDiffer>
    <experiments>3</experiments>
</comment>
<comment type="interaction">
    <interactant intactId="EBI-12092171">
        <id>Q12797-6</id>
    </interactant>
    <interactant intactId="EBI-712073">
        <id>Q8NBJ4</id>
        <label>GOLM1</label>
    </interactant>
    <organismsDiffer>false</organismsDiffer>
    <experiments>3</experiments>
</comment>
<comment type="interaction">
    <interactant intactId="EBI-12092171">
        <id>Q12797-6</id>
    </interactant>
    <interactant intactId="EBI-17253531">
        <id>Q8TDV5</id>
        <label>GPR119</label>
    </interactant>
    <organismsDiffer>false</organismsDiffer>
    <experiments>3</experiments>
</comment>
<comment type="interaction">
    <interactant intactId="EBI-12092171">
        <id>Q12797-6</id>
    </interactant>
    <interactant intactId="EBI-749411">
        <id>Q96SL4</id>
        <label>GPX7</label>
    </interactant>
    <organismsDiffer>false</organismsDiffer>
    <experiments>3</experiments>
</comment>
<comment type="interaction">
    <interactant intactId="EBI-12092171">
        <id>Q12797-6</id>
    </interactant>
    <interactant intactId="EBI-11721746">
        <id>Q8TED1</id>
        <label>GPX8</label>
    </interactant>
    <organismsDiffer>false</organismsDiffer>
    <experiments>3</experiments>
</comment>
<comment type="interaction">
    <interactant intactId="EBI-12092171">
        <id>Q12797-6</id>
    </interactant>
    <interactant intactId="EBI-19954058">
        <id>O15499</id>
        <label>GSC2</label>
    </interactant>
    <organismsDiffer>false</organismsDiffer>
    <experiments>3</experiments>
</comment>
<comment type="interaction">
    <interactant intactId="EBI-12092171">
        <id>Q12797-6</id>
    </interactant>
    <interactant intactId="EBI-12244272">
        <id>Q02747</id>
        <label>GUCA2A</label>
    </interactant>
    <organismsDiffer>false</organismsDiffer>
    <experiments>3</experiments>
</comment>
<comment type="interaction">
    <interactant intactId="EBI-12092171">
        <id>Q12797-6</id>
    </interactant>
    <interactant intactId="EBI-466029">
        <id>P42858</id>
        <label>HTT</label>
    </interactant>
    <organismsDiffer>false</organismsDiffer>
    <experiments>6</experiments>
</comment>
<comment type="interaction">
    <interactant intactId="EBI-12092171">
        <id>Q12797-6</id>
    </interactant>
    <interactant intactId="EBI-6595560">
        <id>Q9HBE4</id>
        <label>IL21</label>
    </interactant>
    <organismsDiffer>false</organismsDiffer>
    <experiments>3</experiments>
</comment>
<comment type="interaction">
    <interactant intactId="EBI-12092171">
        <id>Q12797-6</id>
    </interactant>
    <interactant intactId="EBI-21626318">
        <id>Q9Y5Q6</id>
        <label>INSL5</label>
    </interactant>
    <organismsDiffer>false</organismsDiffer>
    <experiments>3</experiments>
</comment>
<comment type="interaction">
    <interactant intactId="EBI-12092171">
        <id>Q12797-6</id>
    </interactant>
    <interactant intactId="EBI-22452746">
        <id>Q9NZI2-2</id>
        <label>KCNIP1</label>
    </interactant>
    <organismsDiffer>false</organismsDiffer>
    <experiments>3</experiments>
</comment>
<comment type="interaction">
    <interactant intactId="EBI-12092171">
        <id>Q12797-6</id>
    </interactant>
    <interactant intactId="EBI-751501">
        <id>Q9Y2W7</id>
        <label>KCNIP3</label>
    </interactant>
    <organismsDiffer>false</organismsDiffer>
    <experiments>3</experiments>
</comment>
<comment type="interaction">
    <interactant intactId="EBI-12092171">
        <id>Q12797-6</id>
    </interactant>
    <interactant intactId="EBI-1051469">
        <id>Q6PIL6</id>
        <label>KCNIP4</label>
    </interactant>
    <organismsDiffer>false</organismsDiffer>
    <experiments>3</experiments>
</comment>
<comment type="interaction">
    <interactant intactId="EBI-12092171">
        <id>Q12797-6</id>
    </interactant>
    <interactant intactId="EBI-2432309">
        <id>Q92876</id>
        <label>KLK6</label>
    </interactant>
    <organismsDiffer>false</organismsDiffer>
    <experiments>3</experiments>
</comment>
<comment type="interaction">
    <interactant intactId="EBI-12092171">
        <id>Q12797-6</id>
    </interactant>
    <interactant intactId="EBI-11911016">
        <id>P80188</id>
        <label>LCN2</label>
    </interactant>
    <organismsDiffer>false</organismsDiffer>
    <experiments>3</experiments>
</comment>
<comment type="interaction">
    <interactant intactId="EBI-12092171">
        <id>Q12797-6</id>
    </interactant>
    <interactant intactId="EBI-715927">
        <id>P30533</id>
        <label>LRPAP1</label>
    </interactant>
    <organismsDiffer>false</organismsDiffer>
    <experiments>3</experiments>
</comment>
<comment type="interaction">
    <interactant intactId="EBI-12092171">
        <id>Q12797-6</id>
    </interactant>
    <interactant intactId="EBI-524105">
        <id>P01374</id>
        <label>LTA</label>
    </interactant>
    <organismsDiffer>false</organismsDiffer>
    <experiments>3</experiments>
</comment>
<comment type="interaction">
    <interactant intactId="EBI-12092171">
        <id>Q12797-6</id>
    </interactant>
    <interactant intactId="EBI-2683029">
        <id>Q9NX40</id>
        <label>OCIAD1</label>
    </interactant>
    <organismsDiffer>false</organismsDiffer>
    <experiments>3</experiments>
</comment>
<comment type="interaction">
    <interactant intactId="EBI-12092171">
        <id>Q12797-6</id>
    </interactant>
    <interactant intactId="EBI-13342757">
        <id>Q6UW60</id>
        <label>PCSK4</label>
    </interactant>
    <organismsDiffer>false</organismsDiffer>
    <experiments>3</experiments>
</comment>
<comment type="interaction">
    <interactant intactId="EBI-12092171">
        <id>Q12797-6</id>
    </interactant>
    <interactant intactId="EBI-11995148">
        <id>P04085-2</id>
        <label>PDGFA</label>
    </interactant>
    <organismsDiffer>false</organismsDiffer>
    <experiments>5</experiments>
</comment>
<comment type="interaction">
    <interactant intactId="EBI-12092171">
        <id>Q12797-6</id>
    </interactant>
    <interactant intactId="EBI-12253270">
        <id>Q9NWW9</id>
        <label>PLAAT2</label>
    </interactant>
    <organismsDiffer>false</organismsDiffer>
    <experiments>3</experiments>
</comment>
<comment type="interaction">
    <interactant intactId="EBI-12092171">
        <id>Q12797-6</id>
    </interactant>
    <interactant intactId="EBI-742388">
        <id>Q9H8W4</id>
        <label>PLEKHF2</label>
    </interactant>
    <organismsDiffer>false</organismsDiffer>
    <experiments>3</experiments>
</comment>
<comment type="interaction">
    <interactant intactId="EBI-12092171">
        <id>Q12797-6</id>
    </interactant>
    <interactant intactId="EBI-14210385">
        <id>Q59EV6</id>
        <label>PPGB</label>
    </interactant>
    <organismsDiffer>false</organismsDiffer>
    <experiments>3</experiments>
</comment>
<comment type="interaction">
    <interactant intactId="EBI-12092171">
        <id>Q12797-6</id>
    </interactant>
    <interactant intactId="EBI-2116102">
        <id>Q96NZ9</id>
        <label>PRAP1</label>
    </interactant>
    <organismsDiffer>false</organismsDiffer>
    <experiments>3</experiments>
</comment>
<comment type="interaction">
    <interactant intactId="EBI-12092171">
        <id>Q12797-6</id>
    </interactant>
    <interactant intactId="EBI-10173935">
        <id>A5D903</id>
        <label>PRB1</label>
    </interactant>
    <organismsDiffer>false</organismsDiffer>
    <experiments>6</experiments>
</comment>
<comment type="interaction">
    <interactant intactId="EBI-12092171">
        <id>Q12797-6</id>
    </interactant>
    <interactant intactId="EBI-19951389">
        <id>P02812</id>
        <label>PRB2</label>
    </interactant>
    <organismsDiffer>false</organismsDiffer>
    <experiments>3</experiments>
</comment>
<comment type="interaction">
    <interactant intactId="EBI-12092171">
        <id>Q12797-6</id>
    </interactant>
    <interactant intactId="EBI-716817">
        <id>P01270</id>
        <label>PTH</label>
    </interactant>
    <organismsDiffer>false</organismsDiffer>
    <experiments>3</experiments>
</comment>
<comment type="interaction">
    <interactant intactId="EBI-12092171">
        <id>Q12797-6</id>
    </interactant>
    <interactant intactId="EBI-473725">
        <id>P21246</id>
        <label>PTN</label>
    </interactant>
    <organismsDiffer>false</organismsDiffer>
    <experiments>3</experiments>
</comment>
<comment type="interaction">
    <interactant intactId="EBI-12092171">
        <id>Q12797-6</id>
    </interactant>
    <interactant intactId="EBI-948278">
        <id>Q15293</id>
        <label>RCN1</label>
    </interactant>
    <organismsDiffer>false</organismsDiffer>
    <experiments>3</experiments>
</comment>
<comment type="interaction">
    <interactant intactId="EBI-12092171">
        <id>Q12797-6</id>
    </interactant>
    <interactant intactId="EBI-10269209">
        <id>Q8NC24</id>
        <label>RELL2</label>
    </interactant>
    <organismsDiffer>false</organismsDiffer>
    <experiments>3</experiments>
</comment>
<comment type="interaction">
    <interactant intactId="EBI-12092171">
        <id>Q12797-6</id>
    </interactant>
    <interactant intactId="EBI-2372399">
        <id>O60930</id>
        <label>RNASEH1</label>
    </interactant>
    <organismsDiffer>false</organismsDiffer>
    <experiments>3</experiments>
</comment>
<comment type="interaction">
    <interactant intactId="EBI-12092171">
        <id>Q12797-6</id>
    </interactant>
    <interactant intactId="EBI-12947705">
        <id>P0DMR2</id>
        <label>SCGB1C2</label>
    </interactant>
    <organismsDiffer>false</organismsDiffer>
    <experiments>3</experiments>
</comment>
<comment type="interaction">
    <interactant intactId="EBI-12092171">
        <id>Q12797-6</id>
    </interactant>
    <interactant intactId="EBI-1172957">
        <id>P34741</id>
        <label>SDC2</label>
    </interactant>
    <organismsDiffer>false</organismsDiffer>
    <experiments>5</experiments>
</comment>
<comment type="interaction">
    <interactant intactId="EBI-12092171">
        <id>Q12797-6</id>
    </interactant>
    <interactant intactId="EBI-2462271">
        <id>Q15428</id>
        <label>SF3A2</label>
    </interactant>
    <organismsDiffer>false</organismsDiffer>
    <experiments>3</experiments>
</comment>
<comment type="interaction">
    <interactant intactId="EBI-12092171">
        <id>Q12797-6</id>
    </interactant>
    <interactant intactId="EBI-744081">
        <id>Q96EQ0</id>
        <label>SGTB</label>
    </interactant>
    <organismsDiffer>false</organismsDiffer>
    <experiments>3</experiments>
</comment>
<comment type="interaction">
    <interactant intactId="EBI-12092171">
        <id>Q12797-6</id>
    </interactant>
    <interactant intactId="EBI-18037857">
        <id>Q3SXP7</id>
        <label>SHISAL1</label>
    </interactant>
    <organismsDiffer>false</organismsDiffer>
    <experiments>3</experiments>
</comment>
<comment type="interaction">
    <interactant intactId="EBI-12092171">
        <id>Q12797-6</id>
    </interactant>
    <interactant intactId="EBI-12266756">
        <id>Q86UW2</id>
        <label>SLC51B</label>
    </interactant>
    <organismsDiffer>false</organismsDiffer>
    <experiments>5</experiments>
</comment>
<comment type="interaction">
    <interactant intactId="EBI-12092171">
        <id>Q12797-6</id>
    </interactant>
    <interactant intactId="EBI-1051936">
        <id>P58511</id>
        <label>SMIM11</label>
    </interactant>
    <organismsDiffer>false</organismsDiffer>
    <experiments>3</experiments>
</comment>
<comment type="interaction">
    <interactant intactId="EBI-12092171">
        <id>Q12797-6</id>
    </interactant>
    <interactant intactId="EBI-17657124">
        <id>Q96E16</id>
        <label>SMIM19</label>
    </interactant>
    <organismsDiffer>false</organismsDiffer>
    <experiments>3</experiments>
</comment>
<comment type="interaction">
    <interactant intactId="EBI-12092171">
        <id>Q12797-6</id>
    </interactant>
    <interactant intactId="EBI-10195782">
        <id>P08294</id>
        <label>SOD3</label>
    </interactant>
    <organismsDiffer>false</organismsDiffer>
    <experiments>3</experiments>
</comment>
<comment type="interaction">
    <interactant intactId="EBI-12092171">
        <id>Q12797-6</id>
    </interactant>
    <interactant intactId="EBI-8054204">
        <id>P00995</id>
        <label>SPINK1</label>
    </interactant>
    <organismsDiffer>false</organismsDiffer>
    <experiments>3</experiments>
</comment>
<comment type="interaction">
    <interactant intactId="EBI-12092171">
        <id>Q12797-6</id>
    </interactant>
    <interactant intactId="EBI-17684533">
        <id>Q9NRX6</id>
        <label>TMEM167B</label>
    </interactant>
    <organismsDiffer>false</organismsDiffer>
    <experiments>3</experiments>
</comment>
<comment type="interaction">
    <interactant intactId="EBI-12092171">
        <id>Q12797-6</id>
    </interactant>
    <interactant intactId="EBI-6447886">
        <id>Q9Y320</id>
        <label>TMX2</label>
    </interactant>
    <organismsDiffer>false</organismsDiffer>
    <experiments>3</experiments>
</comment>
<comment type="interaction">
    <interactant intactId="EBI-12092171">
        <id>Q12797-6</id>
    </interactant>
    <interactant intactId="EBI-518882">
        <id>O14763</id>
        <label>TNFRSF10B</label>
    </interactant>
    <organismsDiffer>false</organismsDiffer>
    <experiments>3</experiments>
</comment>
<comment type="interaction">
    <interactant intactId="EBI-12092171">
        <id>Q12797-6</id>
    </interactant>
    <interactant intactId="EBI-12261790">
        <id>A0A384ME17</id>
        <label>TUFM</label>
    </interactant>
    <organismsDiffer>false</organismsDiffer>
    <experiments>3</experiments>
</comment>
<comment type="interaction">
    <interactant intactId="EBI-12092171">
        <id>Q12797-6</id>
    </interactant>
    <interactant intactId="EBI-2908241">
        <id>Q96J42</id>
        <label>TXNDC15</label>
    </interactant>
    <organismsDiffer>false</organismsDiffer>
    <experiments>3</experiments>
</comment>
<comment type="interaction">
    <interactant intactId="EBI-12092171">
        <id>Q12797-6</id>
    </interactant>
    <interactant intactId="EBI-12891746">
        <id>O75310</id>
        <label>UGT2B11</label>
    </interactant>
    <organismsDiffer>false</organismsDiffer>
    <experiments>3</experiments>
</comment>
<comment type="interaction">
    <interactant intactId="EBI-12092171">
        <id>Q12797-6</id>
    </interactant>
    <interactant intactId="EBI-11958577">
        <id>Q8WWY7</id>
        <label>WFDC12</label>
    </interactant>
    <organismsDiffer>false</organismsDiffer>
    <experiments>3</experiments>
</comment>
<comment type="interaction">
    <interactant intactId="EBI-12092171">
        <id>Q12797-6</id>
    </interactant>
    <interactant intactId="EBI-12175871">
        <id>Q8TCV5</id>
        <label>WFDC5</label>
    </interactant>
    <organismsDiffer>false</organismsDiffer>
    <experiments>3</experiments>
</comment>
<comment type="interaction">
    <interactant intactId="EBI-12092171">
        <id>Q12797-6</id>
    </interactant>
    <interactant intactId="EBI-746479">
        <id>O60844</id>
        <label>ZG16</label>
    </interactant>
    <organismsDiffer>false</organismsDiffer>
    <experiments>3</experiments>
</comment>
<comment type="interaction">
    <interactant intactId="EBI-12092171">
        <id>Q12797-6</id>
    </interactant>
    <interactant intactId="EBI-13387614">
        <id>A0A087WZY1</id>
    </interactant>
    <organismsDiffer>false</organismsDiffer>
    <experiments>3</experiments>
</comment>
<comment type="interaction">
    <interactant intactId="EBI-12092171">
        <id>Q12797-6</id>
    </interactant>
    <interactant intactId="EBI-17234977">
        <id>A0A1U9X8X8</id>
    </interactant>
    <organismsDiffer>false</organismsDiffer>
    <experiments>3</experiments>
</comment>
<comment type="interaction">
    <interactant intactId="EBI-25953099">
        <id>Q12797-7</id>
    </interactant>
    <interactant intactId="EBI-466029">
        <id>P42858</id>
        <label>HTT</label>
    </interactant>
    <organismsDiffer>false</organismsDiffer>
    <experiments>3</experiments>
</comment>
<comment type="subcellular location">
    <molecule>Isoform 1</molecule>
    <subcellularLocation>
        <location>Endoplasmic reticulum membrane</location>
        <topology evidence="1">Single-pass type II membrane protein</topology>
    </subcellularLocation>
</comment>
<comment type="subcellular location">
    <molecule>Isoform 4</molecule>
    <subcellularLocation>
        <location>Sarcoplasmic reticulum membrane</location>
        <topology evidence="17">Single-pass type II membrane protein</topology>
    </subcellularLocation>
</comment>
<comment type="subcellular location">
    <molecule>Isoform 8</molecule>
    <subcellularLocation>
        <location>Endoplasmic reticulum membrane</location>
        <topology evidence="7">Single-pass type II membrane protein</topology>
    </subcellularLocation>
</comment>
<comment type="alternative products">
    <event type="alternative splicing"/>
    <isoform>
        <id>Q12797-1</id>
        <name>1</name>
        <sequence type="displayed"/>
    </isoform>
    <isoform>
        <id>Q12797-2</id>
        <name>2</name>
        <sequence type="described" ref="VSP_039169 VSP_039170"/>
    </isoform>
    <isoform>
        <id>Q12797-3</id>
        <name>3</name>
        <name>Junctin-1</name>
        <name>Cardiac junctin</name>
        <sequence type="described" ref="VSP_039165 VSP_039166 VSP_039167 VSP_039168"/>
    </isoform>
    <isoform>
        <id>Q12797-4</id>
        <name>4</name>
        <name>Junctin-2</name>
        <name>Junctin</name>
        <sequence type="described" ref="VSP_039165 VSP_039167 VSP_039168"/>
    </isoform>
    <isoform>
        <id>Q12797-5</id>
        <name>5</name>
        <sequence type="described" ref="VSP_039165 VSP_039166 VSP_044238 VSP_039169 VSP_039170"/>
    </isoform>
    <isoform>
        <id>Q12797-10</id>
        <name>10</name>
        <sequence type="described" ref="VSP_039165"/>
    </isoform>
    <isoform>
        <id>Q12797-6</id>
        <name>6</name>
        <sequence type="described" ref="VSP_044236 VSP_039169 VSP_039170"/>
    </isoform>
    <isoform>
        <id>Q12797-7</id>
        <name>7</name>
        <sequence type="described" ref="VSP_039166 VSP_044235 VSP_044237"/>
    </isoform>
    <isoform>
        <id>Q12797-8</id>
        <name>8</name>
        <name>Junctate</name>
        <sequence type="described" ref="VSP_039165 VSP_039166 VSP_039169 VSP_039170"/>
    </isoform>
    <isoform>
        <id>Q12797-9</id>
        <name>9</name>
        <sequence type="described" ref="VSP_039165 VSP_039166 VSP_044236 VSP_039169 VSP_039170"/>
    </isoform>
    <isoform>
        <id>Q12797-11</id>
        <name>11</name>
        <sequence type="described" ref="VSP_059345 VSP_039169 VSP_039170"/>
    </isoform>
    <text evidence="4">Comment: 3 functionally distinct proteins are produced by alternative splicing: Aspartyl/asparaginyl beta-hydroxylase, Junctin and Junctate. Additional isoforms are produced by alternative splicing.</text>
</comment>
<comment type="tissue specificity">
    <text evidence="4">Isoform 1 is detected in all tissues tested. Isoform 8 is mainly expressed in pancreas, heart, brain, kidney and liver. Isoform 8 is expressed in kidney (at protein level).</text>
</comment>
<comment type="disease" evidence="8">
    <disease id="DI-04142">
        <name>Facial dysmorphism, lens dislocation, anterior segment abnormalities, and spontaneous filtering blebs</name>
        <acronym>FDLAB</acronym>
        <description>A syndrome characterized by dislocated crystalline lenses and anterior segment abnormalities in association with a distinctive facies involving flat cheeks and a beaked nose. Some affected individuals develop highly unusual non-traumatic conjunctival cysts (filtering blebs).</description>
        <dbReference type="MIM" id="601552"/>
    </disease>
    <text>The disease is caused by variants affecting the gene represented in this entry.</text>
</comment>
<comment type="similarity">
    <text evidence="16">Belongs to the aspartyl/asparaginyl beta-hydroxylase family.</text>
</comment>
<dbReference type="EC" id="1.14.11.16" evidence="5"/>
<dbReference type="EMBL" id="U03109">
    <property type="protein sequence ID" value="AAA82108.1"/>
    <property type="molecule type" value="mRNA"/>
</dbReference>
<dbReference type="EMBL" id="S83325">
    <property type="protein sequence ID" value="AAB50779.1"/>
    <property type="molecule type" value="mRNA"/>
</dbReference>
<dbReference type="EMBL" id="AF224468">
    <property type="protein sequence ID" value="AAF82246.1"/>
    <property type="molecule type" value="mRNA"/>
</dbReference>
<dbReference type="EMBL" id="AF224469">
    <property type="protein sequence ID" value="AAF82247.1"/>
    <property type="molecule type" value="mRNA"/>
</dbReference>
<dbReference type="EMBL" id="AF289489">
    <property type="protein sequence ID" value="AAG40811.1"/>
    <property type="molecule type" value="mRNA"/>
</dbReference>
<dbReference type="EMBL" id="AF306765">
    <property type="protein sequence ID" value="AAG42257.1"/>
    <property type="molecule type" value="mRNA"/>
</dbReference>
<dbReference type="EMBL" id="AF184241">
    <property type="protein sequence ID" value="AAG16983.1"/>
    <property type="molecule type" value="mRNA"/>
</dbReference>
<dbReference type="EMBL" id="AK295528">
    <property type="protein sequence ID" value="BAG58441.1"/>
    <property type="molecule type" value="mRNA"/>
</dbReference>
<dbReference type="EMBL" id="AK304314">
    <property type="protein sequence ID" value="BAG65166.1"/>
    <property type="molecule type" value="mRNA"/>
</dbReference>
<dbReference type="EMBL" id="AC067881">
    <property type="status" value="NOT_ANNOTATED_CDS"/>
    <property type="molecule type" value="Genomic_DNA"/>
</dbReference>
<dbReference type="EMBL" id="AC090094">
    <property type="status" value="NOT_ANNOTATED_CDS"/>
    <property type="molecule type" value="Genomic_DNA"/>
</dbReference>
<dbReference type="EMBL" id="CH471068">
    <property type="protein sequence ID" value="EAW86841.1"/>
    <property type="molecule type" value="Genomic_DNA"/>
</dbReference>
<dbReference type="EMBL" id="CH471068">
    <property type="protein sequence ID" value="EAW86840.1"/>
    <property type="molecule type" value="Genomic_DNA"/>
</dbReference>
<dbReference type="EMBL" id="CH471068">
    <property type="protein sequence ID" value="EAW86847.1"/>
    <property type="molecule type" value="Genomic_DNA"/>
</dbReference>
<dbReference type="EMBL" id="CH471068">
    <property type="protein sequence ID" value="EAW86848.1"/>
    <property type="molecule type" value="Genomic_DNA"/>
</dbReference>
<dbReference type="EMBL" id="CH471068">
    <property type="protein sequence ID" value="EAW86849.1"/>
    <property type="molecule type" value="Genomic_DNA"/>
</dbReference>
<dbReference type="EMBL" id="BC025236">
    <property type="protein sequence ID" value="AAH25236.1"/>
    <property type="molecule type" value="mRNA"/>
</dbReference>
<dbReference type="EMBL" id="BC066929">
    <property type="protein sequence ID" value="AAH66929.1"/>
    <property type="molecule type" value="mRNA"/>
</dbReference>
<dbReference type="EMBL" id="BC142967">
    <property type="protein sequence ID" value="AAI42968.1"/>
    <property type="molecule type" value="mRNA"/>
</dbReference>
<dbReference type="EMBL" id="BC144362">
    <property type="protein sequence ID" value="AAI44363.1"/>
    <property type="molecule type" value="mRNA"/>
</dbReference>
<dbReference type="CCDS" id="CCDS34898.1">
    <molecule id="Q12797-1"/>
</dbReference>
<dbReference type="CCDS" id="CCDS34899.1">
    <molecule id="Q12797-4"/>
</dbReference>
<dbReference type="CCDS" id="CCDS34900.1">
    <molecule id="Q12797-3"/>
</dbReference>
<dbReference type="CCDS" id="CCDS43742.1">
    <molecule id="Q12797-2"/>
</dbReference>
<dbReference type="CCDS" id="CCDS47866.1">
    <molecule id="Q12797-8"/>
</dbReference>
<dbReference type="CCDS" id="CCDS55234.1">
    <molecule id="Q12797-10"/>
</dbReference>
<dbReference type="CCDS" id="CCDS55235.1">
    <molecule id="Q12797-9"/>
</dbReference>
<dbReference type="CCDS" id="CCDS55236.1">
    <molecule id="Q12797-5"/>
</dbReference>
<dbReference type="CCDS" id="CCDS55237.1">
    <molecule id="Q12797-6"/>
</dbReference>
<dbReference type="CCDS" id="CCDS55238.1">
    <molecule id="Q12797-7"/>
</dbReference>
<dbReference type="CCDS" id="CCDS75746.1">
    <molecule id="Q12797-11"/>
</dbReference>
<dbReference type="PIR" id="I38423">
    <property type="entry name" value="I38423"/>
</dbReference>
<dbReference type="RefSeq" id="NP_001158222.1">
    <molecule id="Q12797-10"/>
    <property type="nucleotide sequence ID" value="NM_001164750.2"/>
</dbReference>
<dbReference type="RefSeq" id="NP_001158223.1">
    <molecule id="Q12797-5"/>
    <property type="nucleotide sequence ID" value="NM_001164751.2"/>
</dbReference>
<dbReference type="RefSeq" id="NP_001158225.1">
    <molecule id="Q12797-9"/>
    <property type="nucleotide sequence ID" value="NM_001164753.2"/>
</dbReference>
<dbReference type="RefSeq" id="NP_001158226.1">
    <molecule id="Q12797-11"/>
    <property type="nucleotide sequence ID" value="NM_001164754.2"/>
</dbReference>
<dbReference type="RefSeq" id="NP_001158227.1">
    <molecule id="Q12797-6"/>
    <property type="nucleotide sequence ID" value="NM_001164755.2"/>
</dbReference>
<dbReference type="RefSeq" id="NP_001158228.1">
    <molecule id="Q12797-7"/>
    <property type="nucleotide sequence ID" value="NM_001164756.2"/>
</dbReference>
<dbReference type="RefSeq" id="NP_001400831.1">
    <molecule id="Q12797-8"/>
    <property type="nucleotide sequence ID" value="NM_001413902.1"/>
</dbReference>
<dbReference type="RefSeq" id="NP_004309.2">
    <molecule id="Q12797-1"/>
    <property type="nucleotide sequence ID" value="NM_004318.3"/>
</dbReference>
<dbReference type="RefSeq" id="NP_064549.1">
    <molecule id="Q12797-3"/>
    <property type="nucleotide sequence ID" value="NM_020164.5"/>
</dbReference>
<dbReference type="RefSeq" id="NP_115855.1">
    <molecule id="Q12797-2"/>
    <property type="nucleotide sequence ID" value="NM_032466.4"/>
</dbReference>
<dbReference type="RefSeq" id="NP_115856.1">
    <molecule id="Q12797-4"/>
    <property type="nucleotide sequence ID" value="NM_032467.4"/>
</dbReference>
<dbReference type="RefSeq" id="NP_115857.1">
    <molecule id="Q12797-8"/>
    <property type="nucleotide sequence ID" value="NM_032468.5"/>
</dbReference>
<dbReference type="PDB" id="5APA">
    <property type="method" value="X-ray"/>
    <property type="resolution" value="2.05 A"/>
    <property type="chains" value="A=562-758"/>
</dbReference>
<dbReference type="PDB" id="5JQY">
    <property type="method" value="X-ray"/>
    <property type="resolution" value="1.99 A"/>
    <property type="chains" value="A=330-758"/>
</dbReference>
<dbReference type="PDB" id="5JTC">
    <property type="method" value="X-ray"/>
    <property type="resolution" value="2.24 A"/>
    <property type="chains" value="A=330-758"/>
</dbReference>
<dbReference type="PDB" id="5JZ6">
    <property type="method" value="X-ray"/>
    <property type="resolution" value="2.35 A"/>
    <property type="chains" value="A=330-758"/>
</dbReference>
<dbReference type="PDB" id="5JZ8">
    <property type="method" value="X-ray"/>
    <property type="resolution" value="2.10 A"/>
    <property type="chains" value="A=330-758"/>
</dbReference>
<dbReference type="PDB" id="5JZA">
    <property type="method" value="X-ray"/>
    <property type="resolution" value="2.14 A"/>
    <property type="chains" value="A=330-758"/>
</dbReference>
<dbReference type="PDB" id="5JZU">
    <property type="method" value="X-ray"/>
    <property type="resolution" value="2.50 A"/>
    <property type="chains" value="A=330-758"/>
</dbReference>
<dbReference type="PDB" id="6Q9F">
    <property type="method" value="X-ray"/>
    <property type="resolution" value="1.63 A"/>
    <property type="chains" value="A=330-758"/>
</dbReference>
<dbReference type="PDB" id="6Q9I">
    <property type="method" value="X-ray"/>
    <property type="resolution" value="1.85 A"/>
    <property type="chains" value="A=330-758"/>
</dbReference>
<dbReference type="PDB" id="6QA5">
    <property type="method" value="X-ray"/>
    <property type="resolution" value="2.65 A"/>
    <property type="chains" value="A=330-758"/>
</dbReference>
<dbReference type="PDB" id="6RK9">
    <property type="method" value="X-ray"/>
    <property type="resolution" value="2.29 A"/>
    <property type="chains" value="A/B=330-758"/>
</dbReference>
<dbReference type="PDB" id="6YYU">
    <property type="method" value="X-ray"/>
    <property type="resolution" value="2.11 A"/>
    <property type="chains" value="A=330-758"/>
</dbReference>
<dbReference type="PDB" id="6YYV">
    <property type="method" value="X-ray"/>
    <property type="resolution" value="1.77 A"/>
    <property type="chains" value="A=330-758"/>
</dbReference>
<dbReference type="PDB" id="6YYW">
    <property type="method" value="X-ray"/>
    <property type="resolution" value="2.27 A"/>
    <property type="chains" value="A=330-758"/>
</dbReference>
<dbReference type="PDB" id="6YYX">
    <property type="method" value="X-ray"/>
    <property type="resolution" value="1.53 A"/>
    <property type="chains" value="A=330-758"/>
</dbReference>
<dbReference type="PDB" id="6YYY">
    <property type="method" value="X-ray"/>
    <property type="resolution" value="2.29 A"/>
    <property type="chains" value="A=330-758"/>
</dbReference>
<dbReference type="PDB" id="6Z6Q">
    <property type="method" value="X-ray"/>
    <property type="resolution" value="1.81 A"/>
    <property type="chains" value="A=330-758"/>
</dbReference>
<dbReference type="PDB" id="6Z6R">
    <property type="method" value="X-ray"/>
    <property type="resolution" value="2.13 A"/>
    <property type="chains" value="A=330-758"/>
</dbReference>
<dbReference type="PDB" id="7BMI">
    <property type="method" value="X-ray"/>
    <property type="resolution" value="1.66 A"/>
    <property type="chains" value="A=330-758"/>
</dbReference>
<dbReference type="PDB" id="7BMJ">
    <property type="method" value="X-ray"/>
    <property type="resolution" value="1.75 A"/>
    <property type="chains" value="A/C=330-758"/>
</dbReference>
<dbReference type="PDB" id="7E6J">
    <property type="method" value="X-ray"/>
    <property type="resolution" value="1.90 A"/>
    <property type="chains" value="A=330-758"/>
</dbReference>
<dbReference type="PDB" id="7YB8">
    <property type="method" value="X-ray"/>
    <property type="resolution" value="1.98 A"/>
    <property type="chains" value="A=330-758"/>
</dbReference>
<dbReference type="PDB" id="7YB9">
    <property type="method" value="X-ray"/>
    <property type="resolution" value="1.54 A"/>
    <property type="chains" value="A=329-758"/>
</dbReference>
<dbReference type="PDB" id="7YBA">
    <property type="method" value="X-ray"/>
    <property type="resolution" value="1.86 A"/>
    <property type="chains" value="A=330-758"/>
</dbReference>
<dbReference type="PDB" id="7YBB">
    <property type="method" value="X-ray"/>
    <property type="resolution" value="1.68 A"/>
    <property type="chains" value="A=330-758"/>
</dbReference>
<dbReference type="PDB" id="7YBC">
    <property type="method" value="X-ray"/>
    <property type="resolution" value="1.84 A"/>
    <property type="chains" value="A=330-758"/>
</dbReference>
<dbReference type="PDB" id="8RE5">
    <property type="method" value="X-ray"/>
    <property type="resolution" value="1.70 A"/>
    <property type="chains" value="A=315-758"/>
</dbReference>
<dbReference type="PDB" id="8RE6">
    <property type="method" value="X-ray"/>
    <property type="resolution" value="1.92 A"/>
    <property type="chains" value="A=315-758"/>
</dbReference>
<dbReference type="PDB" id="8RE7">
    <property type="method" value="X-ray"/>
    <property type="resolution" value="1.95 A"/>
    <property type="chains" value="A=315-758"/>
</dbReference>
<dbReference type="PDB" id="8RE8">
    <property type="method" value="X-ray"/>
    <property type="resolution" value="1.85 A"/>
    <property type="chains" value="A=315-758"/>
</dbReference>
<dbReference type="PDB" id="8RE9">
    <property type="method" value="X-ray"/>
    <property type="resolution" value="1.84 A"/>
    <property type="chains" value="A=315-758"/>
</dbReference>
<dbReference type="PDBsum" id="5APA"/>
<dbReference type="PDBsum" id="5JQY"/>
<dbReference type="PDBsum" id="5JTC"/>
<dbReference type="PDBsum" id="5JZ6"/>
<dbReference type="PDBsum" id="5JZ8"/>
<dbReference type="PDBsum" id="5JZA"/>
<dbReference type="PDBsum" id="5JZU"/>
<dbReference type="PDBsum" id="6Q9F"/>
<dbReference type="PDBsum" id="6Q9I"/>
<dbReference type="PDBsum" id="6QA5"/>
<dbReference type="PDBsum" id="6RK9"/>
<dbReference type="PDBsum" id="6YYU"/>
<dbReference type="PDBsum" id="6YYV"/>
<dbReference type="PDBsum" id="6YYW"/>
<dbReference type="PDBsum" id="6YYX"/>
<dbReference type="PDBsum" id="6YYY"/>
<dbReference type="PDBsum" id="6Z6Q"/>
<dbReference type="PDBsum" id="6Z6R"/>
<dbReference type="PDBsum" id="7BMI"/>
<dbReference type="PDBsum" id="7BMJ"/>
<dbReference type="PDBsum" id="7E6J"/>
<dbReference type="PDBsum" id="7YB8"/>
<dbReference type="PDBsum" id="7YB9"/>
<dbReference type="PDBsum" id="7YBA"/>
<dbReference type="PDBsum" id="7YBB"/>
<dbReference type="PDBsum" id="7YBC"/>
<dbReference type="PDBsum" id="8RE5"/>
<dbReference type="PDBsum" id="8RE6"/>
<dbReference type="PDBsum" id="8RE7"/>
<dbReference type="PDBsum" id="8RE8"/>
<dbReference type="PDBsum" id="8RE9"/>
<dbReference type="SMR" id="Q12797"/>
<dbReference type="BioGRID" id="106936">
    <property type="interactions" value="342"/>
</dbReference>
<dbReference type="FunCoup" id="Q12797">
    <property type="interactions" value="2102"/>
</dbReference>
<dbReference type="IntAct" id="Q12797">
    <property type="interactions" value="220"/>
</dbReference>
<dbReference type="MINT" id="Q12797"/>
<dbReference type="STRING" id="9606.ENSP00000368767"/>
<dbReference type="BindingDB" id="Q12797"/>
<dbReference type="ChEMBL" id="CHEMBL4680030"/>
<dbReference type="DrugBank" id="DB00128">
    <property type="generic name" value="Aspartic acid"/>
</dbReference>
<dbReference type="DrugBank" id="DB00139">
    <property type="generic name" value="Succinic acid"/>
</dbReference>
<dbReference type="DrugCentral" id="Q12797"/>
<dbReference type="TCDB" id="8.A.28.1.5">
    <property type="family name" value="the ankyrin (ankyrin) family"/>
</dbReference>
<dbReference type="GlyConnect" id="1018">
    <property type="glycosylation" value="13 N-Linked glycans (1 site)"/>
</dbReference>
<dbReference type="GlyCosmos" id="Q12797">
    <property type="glycosylation" value="6 sites, 16 glycans"/>
</dbReference>
<dbReference type="GlyGen" id="Q12797">
    <property type="glycosylation" value="11 sites, 29 N-linked glycans (3 sites), 5 O-linked glycans (7 sites)"/>
</dbReference>
<dbReference type="iPTMnet" id="Q12797"/>
<dbReference type="PhosphoSitePlus" id="Q12797"/>
<dbReference type="SwissPalm" id="Q12797"/>
<dbReference type="BioMuta" id="ASPH"/>
<dbReference type="DMDM" id="145559444"/>
<dbReference type="jPOST" id="Q12797"/>
<dbReference type="MassIVE" id="Q12797"/>
<dbReference type="PaxDb" id="9606-ENSP00000368767"/>
<dbReference type="PeptideAtlas" id="Q12797"/>
<dbReference type="ProteomicsDB" id="27096"/>
<dbReference type="ProteomicsDB" id="4295"/>
<dbReference type="ProteomicsDB" id="58944">
    <molecule id="Q12797-1"/>
</dbReference>
<dbReference type="ProteomicsDB" id="58945">
    <molecule id="Q12797-2"/>
</dbReference>
<dbReference type="ProteomicsDB" id="58946">
    <molecule id="Q12797-3"/>
</dbReference>
<dbReference type="ProteomicsDB" id="58947">
    <molecule id="Q12797-4"/>
</dbReference>
<dbReference type="ProteomicsDB" id="66767"/>
<dbReference type="ProteomicsDB" id="7252"/>
<dbReference type="ProteomicsDB" id="73953"/>
<dbReference type="ProteomicsDB" id="80510"/>
<dbReference type="Pumba" id="Q12797"/>
<dbReference type="TopDownProteomics" id="Q12797-1">
    <molecule id="Q12797-1"/>
</dbReference>
<dbReference type="TopDownProteomics" id="Q12797-2">
    <molecule id="Q12797-2"/>
</dbReference>
<dbReference type="Antibodypedia" id="24707">
    <property type="antibodies" value="329 antibodies from 31 providers"/>
</dbReference>
<dbReference type="DNASU" id="444"/>
<dbReference type="Ensembl" id="ENST00000356457.9">
    <molecule id="Q12797-2"/>
    <property type="protein sequence ID" value="ENSP00000348841.5"/>
    <property type="gene ID" value="ENSG00000198363.18"/>
</dbReference>
<dbReference type="Ensembl" id="ENST00000379449.11">
    <molecule id="Q12797-7"/>
    <property type="protein sequence ID" value="ENSP00000368762.5"/>
    <property type="gene ID" value="ENSG00000198363.18"/>
</dbReference>
<dbReference type="Ensembl" id="ENST00000379454.9">
    <molecule id="Q12797-1"/>
    <property type="protein sequence ID" value="ENSP00000368767.4"/>
    <property type="gene ID" value="ENSG00000198363.18"/>
</dbReference>
<dbReference type="Ensembl" id="ENST00000389204.9">
    <molecule id="Q12797-3"/>
    <property type="protein sequence ID" value="ENSP00000373856.4"/>
    <property type="gene ID" value="ENSG00000198363.18"/>
</dbReference>
<dbReference type="Ensembl" id="ENST00000445642.6">
    <molecule id="Q12797-11"/>
    <property type="protein sequence ID" value="ENSP00000394013.4"/>
    <property type="gene ID" value="ENSG00000198363.18"/>
</dbReference>
<dbReference type="Ensembl" id="ENST00000517847.7">
    <molecule id="Q12797-8"/>
    <property type="protein sequence ID" value="ENSP00000429954.2"/>
    <property type="gene ID" value="ENSG00000198363.18"/>
</dbReference>
<dbReference type="Ensembl" id="ENST00000517903.5">
    <molecule id="Q12797-5"/>
    <property type="protein sequence ID" value="ENSP00000430245.1"/>
    <property type="gene ID" value="ENSG00000198363.18"/>
</dbReference>
<dbReference type="Ensembl" id="ENST00000518068.5">
    <molecule id="Q12797-6"/>
    <property type="protein sequence ID" value="ENSP00000429286.1"/>
    <property type="gene ID" value="ENSG00000198363.18"/>
</dbReference>
<dbReference type="Ensembl" id="ENST00000522603.5">
    <molecule id="Q12797-4"/>
    <property type="protein sequence ID" value="ENSP00000436188.1"/>
    <property type="gene ID" value="ENSG00000198363.18"/>
</dbReference>
<dbReference type="Ensembl" id="ENST00000522835.5">
    <molecule id="Q12797-9"/>
    <property type="protein sequence ID" value="ENSP00000429160.1"/>
    <property type="gene ID" value="ENSG00000198363.18"/>
</dbReference>
<dbReference type="Ensembl" id="ENST00000541428.5">
    <molecule id="Q12797-10"/>
    <property type="protein sequence ID" value="ENSP00000437864.1"/>
    <property type="gene ID" value="ENSG00000198363.18"/>
</dbReference>
<dbReference type="GeneID" id="444"/>
<dbReference type="KEGG" id="hsa:444"/>
<dbReference type="MANE-Select" id="ENST00000379454.9">
    <property type="protein sequence ID" value="ENSP00000368767.4"/>
    <property type="RefSeq nucleotide sequence ID" value="NM_004318.4"/>
    <property type="RefSeq protein sequence ID" value="NP_004309.2"/>
</dbReference>
<dbReference type="UCSC" id="uc003xuj.4">
    <molecule id="Q12797-1"/>
    <property type="organism name" value="human"/>
</dbReference>
<dbReference type="AGR" id="HGNC:757"/>
<dbReference type="CTD" id="444"/>
<dbReference type="DisGeNET" id="444"/>
<dbReference type="GeneCards" id="ASPH"/>
<dbReference type="HGNC" id="HGNC:757">
    <property type="gene designation" value="ASPH"/>
</dbReference>
<dbReference type="HPA" id="ENSG00000198363">
    <property type="expression patterns" value="Tissue enhanced (adipose)"/>
</dbReference>
<dbReference type="MalaCards" id="ASPH"/>
<dbReference type="MIM" id="600582">
    <property type="type" value="gene"/>
</dbReference>
<dbReference type="MIM" id="601552">
    <property type="type" value="phenotype"/>
</dbReference>
<dbReference type="neXtProt" id="NX_Q12797"/>
<dbReference type="OpenTargets" id="ENSG00000198363"/>
<dbReference type="Orphanet" id="412022">
    <property type="disease" value="Facial dysmorphism-lens dislocation-anterior segment abnormalities-spontaneous filtering blebs syndrome"/>
</dbReference>
<dbReference type="PharmGKB" id="PA25056"/>
<dbReference type="VEuPathDB" id="HostDB:ENSG00000198363"/>
<dbReference type="eggNOG" id="KOG3696">
    <property type="taxonomic scope" value="Eukaryota"/>
</dbReference>
<dbReference type="GeneTree" id="ENSGT00940000156304"/>
<dbReference type="HOGENOM" id="CLU_106984_0_0_1"/>
<dbReference type="InParanoid" id="Q12797"/>
<dbReference type="OMA" id="YTELVKX"/>
<dbReference type="OrthoDB" id="438431at2759"/>
<dbReference type="PAN-GO" id="Q12797">
    <property type="GO annotations" value="2 GO annotations based on evolutionary models"/>
</dbReference>
<dbReference type="PhylomeDB" id="Q12797"/>
<dbReference type="TreeFam" id="TF312799"/>
<dbReference type="BRENDA" id="1.14.11.16">
    <property type="organism ID" value="2681"/>
</dbReference>
<dbReference type="PathwayCommons" id="Q12797"/>
<dbReference type="Reactome" id="R-HSA-2672351">
    <property type="pathway name" value="Stimuli-sensing channels"/>
</dbReference>
<dbReference type="Reactome" id="R-HSA-5578775">
    <property type="pathway name" value="Ion homeostasis"/>
</dbReference>
<dbReference type="Reactome" id="R-HSA-9629569">
    <property type="pathway name" value="Protein hydroxylation"/>
</dbReference>
<dbReference type="SignaLink" id="Q12797"/>
<dbReference type="BioGRID-ORCS" id="444">
    <property type="hits" value="14 hits in 1157 CRISPR screens"/>
</dbReference>
<dbReference type="ChiTaRS" id="ASPH">
    <property type="organism name" value="human"/>
</dbReference>
<dbReference type="EvolutionaryTrace" id="Q12797"/>
<dbReference type="GeneWiki" id="ASPH"/>
<dbReference type="GenomeRNAi" id="444"/>
<dbReference type="Pharos" id="Q12797">
    <property type="development level" value="Tchem"/>
</dbReference>
<dbReference type="PRO" id="PR:Q12797"/>
<dbReference type="Proteomes" id="UP000005640">
    <property type="component" value="Chromosome 8"/>
</dbReference>
<dbReference type="RNAct" id="Q12797">
    <property type="molecule type" value="protein"/>
</dbReference>
<dbReference type="Bgee" id="ENSG00000198363">
    <property type="expression patterns" value="Expressed in calcaneal tendon and 202 other cell types or tissues"/>
</dbReference>
<dbReference type="ExpressionAtlas" id="Q12797">
    <property type="expression patterns" value="baseline and differential"/>
</dbReference>
<dbReference type="GO" id="GO:0034704">
    <property type="term" value="C:calcium channel complex"/>
    <property type="evidence" value="ECO:0000304"/>
    <property type="project" value="BHF-UCL"/>
</dbReference>
<dbReference type="GO" id="GO:0032541">
    <property type="term" value="C:cortical endoplasmic reticulum"/>
    <property type="evidence" value="ECO:0000314"/>
    <property type="project" value="UniProtKB"/>
</dbReference>
<dbReference type="GO" id="GO:0005783">
    <property type="term" value="C:endoplasmic reticulum"/>
    <property type="evidence" value="ECO:0000314"/>
    <property type="project" value="HPA"/>
</dbReference>
<dbReference type="GO" id="GO:0005789">
    <property type="term" value="C:endoplasmic reticulum membrane"/>
    <property type="evidence" value="ECO:0000314"/>
    <property type="project" value="UniProtKB"/>
</dbReference>
<dbReference type="GO" id="GO:0014701">
    <property type="term" value="C:junctional sarcoplasmic reticulum membrane"/>
    <property type="evidence" value="ECO:0000304"/>
    <property type="project" value="BHF-UCL"/>
</dbReference>
<dbReference type="GO" id="GO:0005886">
    <property type="term" value="C:plasma membrane"/>
    <property type="evidence" value="ECO:0000314"/>
    <property type="project" value="UniProtKB"/>
</dbReference>
<dbReference type="GO" id="GO:0033018">
    <property type="term" value="C:sarcoplasmic reticulum lumen"/>
    <property type="evidence" value="ECO:0000304"/>
    <property type="project" value="BHF-UCL"/>
</dbReference>
<dbReference type="GO" id="GO:0033017">
    <property type="term" value="C:sarcoplasmic reticulum membrane"/>
    <property type="evidence" value="ECO:0000304"/>
    <property type="project" value="BHF-UCL"/>
</dbReference>
<dbReference type="GO" id="GO:0005509">
    <property type="term" value="F:calcium ion binding"/>
    <property type="evidence" value="ECO:0000314"/>
    <property type="project" value="UniProtKB"/>
</dbReference>
<dbReference type="GO" id="GO:0009055">
    <property type="term" value="F:electron transfer activity"/>
    <property type="evidence" value="ECO:0000304"/>
    <property type="project" value="UniProtKB"/>
</dbReference>
<dbReference type="GO" id="GO:0062101">
    <property type="term" value="F:peptidyl-aspartic acid 3-dioxygenase activity"/>
    <property type="evidence" value="ECO:0000318"/>
    <property type="project" value="GO_Central"/>
</dbReference>
<dbReference type="GO" id="GO:0008307">
    <property type="term" value="F:structural constituent of muscle"/>
    <property type="evidence" value="ECO:0000304"/>
    <property type="project" value="ProtInc"/>
</dbReference>
<dbReference type="GO" id="GO:0005198">
    <property type="term" value="F:structural molecule activity"/>
    <property type="evidence" value="ECO:0000304"/>
    <property type="project" value="ProtInc"/>
</dbReference>
<dbReference type="GO" id="GO:0044325">
    <property type="term" value="F:transmembrane transporter binding"/>
    <property type="evidence" value="ECO:0000304"/>
    <property type="project" value="BHF-UCL"/>
</dbReference>
<dbReference type="GO" id="GO:0032237">
    <property type="term" value="P:activation of store-operated calcium channel activity"/>
    <property type="evidence" value="ECO:0000314"/>
    <property type="project" value="UniProtKB"/>
</dbReference>
<dbReference type="GO" id="GO:0055074">
    <property type="term" value="P:calcium ion homeostasis"/>
    <property type="evidence" value="ECO:0000314"/>
    <property type="project" value="UniProtKB"/>
</dbReference>
<dbReference type="GO" id="GO:0070588">
    <property type="term" value="P:calcium ion transmembrane transport"/>
    <property type="evidence" value="ECO:0000314"/>
    <property type="project" value="UniProtKB"/>
</dbReference>
<dbReference type="GO" id="GO:0008283">
    <property type="term" value="P:cell population proliferation"/>
    <property type="evidence" value="ECO:0007669"/>
    <property type="project" value="Ensembl"/>
</dbReference>
<dbReference type="GO" id="GO:0071277">
    <property type="term" value="P:cellular response to calcium ion"/>
    <property type="evidence" value="ECO:0000314"/>
    <property type="project" value="UniProtKB"/>
</dbReference>
<dbReference type="GO" id="GO:0005513">
    <property type="term" value="P:detection of calcium ion"/>
    <property type="evidence" value="ECO:0000304"/>
    <property type="project" value="BHF-UCL"/>
</dbReference>
<dbReference type="GO" id="GO:0060325">
    <property type="term" value="P:face morphogenesis"/>
    <property type="evidence" value="ECO:0007669"/>
    <property type="project" value="Ensembl"/>
</dbReference>
<dbReference type="GO" id="GO:0035108">
    <property type="term" value="P:limb morphogenesis"/>
    <property type="evidence" value="ECO:0007669"/>
    <property type="project" value="Ensembl"/>
</dbReference>
<dbReference type="GO" id="GO:0006936">
    <property type="term" value="P:muscle contraction"/>
    <property type="evidence" value="ECO:0000304"/>
    <property type="project" value="ProtInc"/>
</dbReference>
<dbReference type="GO" id="GO:0008285">
    <property type="term" value="P:negative regulation of cell population proliferation"/>
    <property type="evidence" value="ECO:0007669"/>
    <property type="project" value="Ensembl"/>
</dbReference>
<dbReference type="GO" id="GO:0007389">
    <property type="term" value="P:pattern specification process"/>
    <property type="evidence" value="ECO:0007669"/>
    <property type="project" value="Ensembl"/>
</dbReference>
<dbReference type="GO" id="GO:0010524">
    <property type="term" value="P:positive regulation of calcium ion transport into cytosol"/>
    <property type="evidence" value="ECO:0000314"/>
    <property type="project" value="UniProtKB"/>
</dbReference>
<dbReference type="GO" id="GO:0045893">
    <property type="term" value="P:positive regulation of DNA-templated transcription"/>
    <property type="evidence" value="ECO:0000315"/>
    <property type="project" value="UniProtKB"/>
</dbReference>
<dbReference type="GO" id="GO:0090316">
    <property type="term" value="P:positive regulation of intracellular protein transport"/>
    <property type="evidence" value="ECO:0000314"/>
    <property type="project" value="UniProtKB"/>
</dbReference>
<dbReference type="GO" id="GO:0045862">
    <property type="term" value="P:positive regulation of proteolysis"/>
    <property type="evidence" value="ECO:0000314"/>
    <property type="project" value="BHF-UCL"/>
</dbReference>
<dbReference type="GO" id="GO:0010881">
    <property type="term" value="P:regulation of cardiac muscle contraction by regulation of the release of sequestered calcium ion"/>
    <property type="evidence" value="ECO:0000250"/>
    <property type="project" value="BHF-UCL"/>
</dbReference>
<dbReference type="GO" id="GO:0010649">
    <property type="term" value="P:regulation of cell communication by electrical coupling"/>
    <property type="evidence" value="ECO:0000304"/>
    <property type="project" value="BHF-UCL"/>
</dbReference>
<dbReference type="GO" id="GO:0051480">
    <property type="term" value="P:regulation of cytosolic calcium ion concentration"/>
    <property type="evidence" value="ECO:0000318"/>
    <property type="project" value="GO_Central"/>
</dbReference>
<dbReference type="GO" id="GO:0031585">
    <property type="term" value="P:regulation of inositol 1,4,5-trisphosphate-sensitive calcium-release channel activity"/>
    <property type="evidence" value="ECO:0000314"/>
    <property type="project" value="UniProtKB"/>
</dbReference>
<dbReference type="GO" id="GO:1901879">
    <property type="term" value="P:regulation of protein depolymerization"/>
    <property type="evidence" value="ECO:0007669"/>
    <property type="project" value="Ensembl"/>
</dbReference>
<dbReference type="GO" id="GO:0031647">
    <property type="term" value="P:regulation of protein stability"/>
    <property type="evidence" value="ECO:0007669"/>
    <property type="project" value="Ensembl"/>
</dbReference>
<dbReference type="GO" id="GO:0010880">
    <property type="term" value="P:regulation of release of sequestered calcium ion into cytosol by sarcoplasmic reticulum"/>
    <property type="evidence" value="ECO:0000304"/>
    <property type="project" value="BHF-UCL"/>
</dbReference>
<dbReference type="GO" id="GO:0033198">
    <property type="term" value="P:response to ATP"/>
    <property type="evidence" value="ECO:0000314"/>
    <property type="project" value="UniProtKB"/>
</dbReference>
<dbReference type="GO" id="GO:0060021">
    <property type="term" value="P:roof of mouth development"/>
    <property type="evidence" value="ECO:0007669"/>
    <property type="project" value="Ensembl"/>
</dbReference>
<dbReference type="FunFam" id="1.25.40.10:FF:000151">
    <property type="entry name" value="Aspartyl/asparaginyl beta-hydroxylase"/>
    <property type="match status" value="1"/>
</dbReference>
<dbReference type="FunFam" id="1.25.40.10:FF:000154">
    <property type="entry name" value="Aspartyl/asparaginyl beta-hydroxylase"/>
    <property type="match status" value="1"/>
</dbReference>
<dbReference type="FunFam" id="2.60.120.330:FF:000004">
    <property type="entry name" value="aspartyl/asparaginyl beta-hydroxylase isoform X2"/>
    <property type="match status" value="1"/>
</dbReference>
<dbReference type="Gene3D" id="2.60.120.330">
    <property type="entry name" value="B-lactam Antibiotic, Isopenicillin N Synthase, Chain"/>
    <property type="match status" value="1"/>
</dbReference>
<dbReference type="Gene3D" id="1.25.40.10">
    <property type="entry name" value="Tetratricopeptide repeat domain"/>
    <property type="match status" value="2"/>
</dbReference>
<dbReference type="InterPro" id="IPR007943">
    <property type="entry name" value="Asp-B-hydro/Triadin_dom"/>
</dbReference>
<dbReference type="InterPro" id="IPR007803">
    <property type="entry name" value="Asp/Arg/Pro-Hydrxlase"/>
</dbReference>
<dbReference type="InterPro" id="IPR039038">
    <property type="entry name" value="ASPH"/>
</dbReference>
<dbReference type="InterPro" id="IPR027443">
    <property type="entry name" value="IPNS-like_sf"/>
</dbReference>
<dbReference type="InterPro" id="IPR011990">
    <property type="entry name" value="TPR-like_helical_dom_sf"/>
</dbReference>
<dbReference type="InterPro" id="IPR019734">
    <property type="entry name" value="TPR_rpt"/>
</dbReference>
<dbReference type="PANTHER" id="PTHR12366">
    <property type="entry name" value="ASPARTYL/ASPARAGINYL BETA-HYDROXYLASE"/>
    <property type="match status" value="1"/>
</dbReference>
<dbReference type="PANTHER" id="PTHR12366:SF33">
    <property type="entry name" value="ASPARTYL_ASPARAGINYL BETA-HYDROXYLASE"/>
    <property type="match status" value="1"/>
</dbReference>
<dbReference type="Pfam" id="PF05279">
    <property type="entry name" value="Asp-B-Hydro_N"/>
    <property type="match status" value="1"/>
</dbReference>
<dbReference type="Pfam" id="PF05118">
    <property type="entry name" value="Asp_Arg_Hydrox"/>
    <property type="match status" value="1"/>
</dbReference>
<dbReference type="Pfam" id="PF13432">
    <property type="entry name" value="TPR_16"/>
    <property type="match status" value="1"/>
</dbReference>
<dbReference type="SMART" id="SM00028">
    <property type="entry name" value="TPR"/>
    <property type="match status" value="2"/>
</dbReference>
<dbReference type="SUPFAM" id="SSF51197">
    <property type="entry name" value="Clavaminate synthase-like"/>
    <property type="match status" value="1"/>
</dbReference>
<dbReference type="SUPFAM" id="SSF48452">
    <property type="entry name" value="TPR-like"/>
    <property type="match status" value="1"/>
</dbReference>
<dbReference type="PROSITE" id="PS50005">
    <property type="entry name" value="TPR"/>
    <property type="match status" value="2"/>
</dbReference>
<dbReference type="PROSITE" id="PS50293">
    <property type="entry name" value="TPR_REGION"/>
    <property type="match status" value="1"/>
</dbReference>
<gene>
    <name type="primary">ASPH</name>
    <name type="synonym">BAH</name>
</gene>
<evidence type="ECO:0000250" key="1">
    <source>
        <dbReference type="UniProtKB" id="Q28056"/>
    </source>
</evidence>
<evidence type="ECO:0000255" key="2"/>
<evidence type="ECO:0000256" key="3">
    <source>
        <dbReference type="SAM" id="MobiDB-lite"/>
    </source>
</evidence>
<evidence type="ECO:0000269" key="4">
    <source>
    </source>
</evidence>
<evidence type="ECO:0000269" key="5">
    <source>
    </source>
</evidence>
<evidence type="ECO:0000269" key="6">
    <source>
    </source>
</evidence>
<evidence type="ECO:0000269" key="7">
    <source>
    </source>
</evidence>
<evidence type="ECO:0000269" key="8">
    <source>
    </source>
</evidence>
<evidence type="ECO:0000269" key="9">
    <source ref="18"/>
</evidence>
<evidence type="ECO:0000303" key="10">
    <source>
    </source>
</evidence>
<evidence type="ECO:0000303" key="11">
    <source>
    </source>
</evidence>
<evidence type="ECO:0000303" key="12">
    <source>
    </source>
</evidence>
<evidence type="ECO:0000303" key="13">
    <source>
    </source>
</evidence>
<evidence type="ECO:0000303" key="14">
    <source>
    </source>
</evidence>
<evidence type="ECO:0000303" key="15">
    <source>
    </source>
</evidence>
<evidence type="ECO:0000305" key="16"/>
<evidence type="ECO:0000305" key="17">
    <source>
    </source>
</evidence>
<evidence type="ECO:0000305" key="18">
    <source>
    </source>
</evidence>
<evidence type="ECO:0007744" key="19">
    <source>
    </source>
</evidence>
<evidence type="ECO:0007829" key="20">
    <source>
        <dbReference type="PDB" id="6YYV"/>
    </source>
</evidence>
<evidence type="ECO:0007829" key="21">
    <source>
        <dbReference type="PDB" id="6YYX"/>
    </source>
</evidence>
<evidence type="ECO:0007829" key="22">
    <source>
        <dbReference type="PDB" id="7YB9"/>
    </source>
</evidence>
<feature type="chain" id="PRO_0000064706" description="Aspartyl/asparaginyl beta-hydroxylase">
    <location>
        <begin position="1"/>
        <end position="758"/>
    </location>
</feature>
<feature type="topological domain" description="Cytoplasmic" evidence="2">
    <location>
        <begin position="1"/>
        <end position="53"/>
    </location>
</feature>
<feature type="transmembrane region" description="Helical; Signal-anchor for type II membrane protein" evidence="2">
    <location>
        <begin position="54"/>
        <end position="74"/>
    </location>
</feature>
<feature type="topological domain" description="Lumenal" evidence="2">
    <location>
        <begin position="75"/>
        <end position="758"/>
    </location>
</feature>
<feature type="repeat" description="TPR 1">
    <location>
        <begin position="341"/>
        <end position="374"/>
    </location>
</feature>
<feature type="repeat" description="TPR 2">
    <location>
        <begin position="454"/>
        <end position="487"/>
    </location>
</feature>
<feature type="repeat" description="TPR 3">
    <location>
        <begin position="489"/>
        <end position="521"/>
    </location>
</feature>
<feature type="repeat" description="TPR 4">
    <location>
        <begin position="525"/>
        <end position="557"/>
    </location>
</feature>
<feature type="region of interest" description="Disordered" evidence="3">
    <location>
        <begin position="1"/>
        <end position="46"/>
    </location>
</feature>
<feature type="region of interest" description="Disordered" evidence="3">
    <location>
        <begin position="111"/>
        <end position="140"/>
    </location>
</feature>
<feature type="region of interest" description="Disordered" evidence="3">
    <location>
        <begin position="304"/>
        <end position="324"/>
    </location>
</feature>
<feature type="compositionally biased region" description="Low complexity" evidence="3">
    <location>
        <begin position="9"/>
        <end position="31"/>
    </location>
</feature>
<feature type="compositionally biased region" description="Basic and acidic residues" evidence="3">
    <location>
        <begin position="313"/>
        <end position="324"/>
    </location>
</feature>
<feature type="binding site" evidence="18">
    <location>
        <position position="91"/>
    </location>
    <ligand>
        <name>Ca(2+)</name>
        <dbReference type="ChEBI" id="CHEBI:29108"/>
    </ligand>
</feature>
<feature type="binding site" evidence="18">
    <location>
        <position position="93"/>
    </location>
    <ligand>
        <name>Ca(2+)</name>
        <dbReference type="ChEBI" id="CHEBI:29108"/>
    </ligand>
</feature>
<feature type="binding site" evidence="18">
    <location>
        <position position="95"/>
    </location>
    <ligand>
        <name>Ca(2+)</name>
        <dbReference type="ChEBI" id="CHEBI:29108"/>
    </ligand>
</feature>
<feature type="binding site" evidence="18">
    <location>
        <position position="97"/>
    </location>
    <ligand>
        <name>Ca(2+)</name>
        <dbReference type="ChEBI" id="CHEBI:29108"/>
    </ligand>
</feature>
<feature type="binding site" evidence="18">
    <location>
        <position position="102"/>
    </location>
    <ligand>
        <name>Ca(2+)</name>
        <dbReference type="ChEBI" id="CHEBI:29108"/>
    </ligand>
</feature>
<feature type="binding site" evidence="9">
    <location>
        <position position="625"/>
    </location>
    <ligand>
        <name>2-oxoglutarate</name>
        <dbReference type="ChEBI" id="CHEBI:16810"/>
    </ligand>
</feature>
<feature type="binding site" evidence="9">
    <location>
        <position position="668"/>
    </location>
    <ligand>
        <name>2-oxoglutarate</name>
        <dbReference type="ChEBI" id="CHEBI:16810"/>
    </ligand>
</feature>
<feature type="binding site" evidence="16">
    <location>
        <position position="679"/>
    </location>
    <ligand>
        <name>Fe cation</name>
        <dbReference type="ChEBI" id="CHEBI:24875"/>
    </ligand>
</feature>
<feature type="binding site" evidence="9">
    <location>
        <begin position="688"/>
        <end position="690"/>
    </location>
    <ligand>
        <name>2-oxoglutarate</name>
        <dbReference type="ChEBI" id="CHEBI:16810"/>
    </ligand>
</feature>
<feature type="binding site" evidence="16">
    <location>
        <position position="725"/>
    </location>
    <ligand>
        <name>Fe cation</name>
        <dbReference type="ChEBI" id="CHEBI:24875"/>
    </ligand>
</feature>
<feature type="binding site" evidence="9">
    <location>
        <position position="735"/>
    </location>
    <ligand>
        <name>2-oxoglutarate</name>
        <dbReference type="ChEBI" id="CHEBI:16810"/>
    </ligand>
</feature>
<feature type="modified residue" description="Phosphoserine" evidence="19">
    <location>
        <position position="14"/>
    </location>
</feature>
<feature type="glycosylation site" description="N-linked (GlcNAc...) asparagine">
    <location>
        <position position="452"/>
    </location>
</feature>
<feature type="glycosylation site" description="N-linked (GlcNAc...) asparagine" evidence="2">
    <location>
        <position position="706"/>
    </location>
</feature>
<feature type="disulfide bond" evidence="9">
    <location>
        <begin position="641"/>
        <end position="648"/>
    </location>
</feature>
<feature type="splice variant" id="VSP_039165" description="In isoform 3, isoform 4, isoform 5, isoform 8, isoform 9 and isoform 10." evidence="10 12 13 14 15">
    <original>MAQRKNAKSSGNSSSSGSGSGSTSAGSSSPGARR</original>
    <variation>MAEDK</variation>
    <location>
        <begin position="1"/>
        <end position="34"/>
    </location>
</feature>
<feature type="splice variant" id="VSP_039166" description="In isoform 3, isoform 5, isoform 7, isoform 8 and isoform 9." evidence="10 12 13 14 15">
    <original>L</original>
    <variation>LAKAKDFRYNLSEVLQ</variation>
    <location>
        <position position="84"/>
    </location>
</feature>
<feature type="splice variant" id="VSP_039167" description="In isoform 3 and isoform 4." evidence="10 12">
    <original>GLKERSTSEPAVPPEEAEPHTEPEEQVPVEAEPQNIEDEAKEQIQSLLHEMVHAEHVEGEDLQQEDGPTGEPQQEDDEFLMATDVDDRFETLEPEVSHEETEHSYHVEETVSQDCNQDMEEMMSEQENPDSS</original>
    <variation>EGPSGVAKRKTKAKVKELTKEELKKEKEKPESRKESKNEERKKGKKEDVRKDKKIADADLSRKESPKGKKDREKEKVDLEKSAKTKENRKKSTNMKDVSSKMASRDKDDRKESRSSTRYAHLTKGNTQKRNG</variation>
    <location>
        <begin position="108"/>
        <end position="239"/>
    </location>
</feature>
<feature type="splice variant" id="VSP_044235" description="In isoform 7." evidence="15">
    <original>KERSTSEPAVPPEEAEPHTEPEEQVPVEAEPQNIEDEAKEQIQSLLHEMVHAEHVEGEDLQQEDGPTGEPQQEDDEFLM</original>
    <variation>TKDGSNENIDSLEEVLNILAEESSDWFYGFLSFLYDIMTPFEMLEEEEEESETADGVDGTSQNEGVQGKTCVILDLHNQ</variation>
    <location>
        <begin position="110"/>
        <end position="188"/>
    </location>
</feature>
<feature type="splice variant" id="VSP_044236" description="In isoform 6 and isoform 9." evidence="14 15">
    <location>
        <begin position="164"/>
        <end position="206"/>
    </location>
</feature>
<feature type="splice variant" id="VSP_044237" description="In isoform 7." evidence="15">
    <location>
        <begin position="189"/>
        <end position="758"/>
    </location>
</feature>
<feature type="splice variant" id="VSP_059345" description="In isoform 11.">
    <location>
        <begin position="218"/>
        <end position="236"/>
    </location>
</feature>
<feature type="splice variant" id="VSP_039168" description="In isoform 3 and isoform 4." evidence="10 12">
    <location>
        <begin position="240"/>
        <end position="758"/>
    </location>
</feature>
<feature type="splice variant" id="VSP_044238" description="In isoform 5." evidence="15">
    <location>
        <position position="264"/>
    </location>
</feature>
<feature type="splice variant" id="VSP_039169" description="In isoform 2, isoform 5, isoform 6, isoform 8, isoform 9 and isoform 11." evidence="11 13 14 15">
    <original>ET</original>
    <variation>DT</variation>
    <location>
        <begin position="312"/>
        <end position="313"/>
    </location>
</feature>
<feature type="splice variant" id="VSP_039170" description="In isoform 2, isoform 5, isoform 6, isoform 8, isoform 9 and isoform 11." evidence="11 13 14 15">
    <location>
        <begin position="314"/>
        <end position="758"/>
    </location>
</feature>
<feature type="sequence variant" id="VAR_053781" description="In dbSNP:rs6995412.">
    <original>R</original>
    <variation>M</variation>
    <location>
        <position position="354"/>
    </location>
</feature>
<feature type="sequence variant" id="VAR_071821" description="In FDLAB; dbSNP:rs374385878." evidence="8">
    <original>R</original>
    <variation>W</variation>
    <location>
        <position position="735"/>
    </location>
</feature>
<feature type="mutagenesis site" description="Increase in cytoplasmic Ca(2+) via activation of endogenous CRAC channels." evidence="7">
    <original>DAD</original>
    <variation>AAA</variation>
    <location>
        <begin position="91"/>
        <end position="93"/>
    </location>
</feature>
<feature type="sequence conflict" description="In Ref. 7; BAG65166." evidence="16" ref="7">
    <original>D</original>
    <variation>N</variation>
    <location>
        <position position="519"/>
    </location>
</feature>
<feature type="sequence conflict" description="In Ref. 1; AAA82108." evidence="16" ref="1">
    <original>Y</original>
    <variation>I</variation>
    <location>
        <position position="565"/>
    </location>
</feature>
<feature type="sequence conflict" description="In Ref. 1; AAA82108." evidence="16" ref="1">
    <original>WWT</original>
    <variation>CG</variation>
    <location>
        <begin position="575"/>
        <end position="577"/>
    </location>
</feature>
<feature type="sequence conflict" description="In Ref. 1; AAA82108." evidence="16" ref="1">
    <original>E</original>
    <variation>Q</variation>
    <location>
        <position position="585"/>
    </location>
</feature>
<feature type="sequence conflict" description="In Ref. 7; BAG65166." evidence="16" ref="7">
    <original>D</original>
    <variation>Y</variation>
    <location>
        <position position="599"/>
    </location>
</feature>
<feature type="sequence conflict" description="In Ref. 2; AAB50779." evidence="16" ref="2">
    <original>K</original>
    <variation>R</variation>
    <location>
        <position position="709"/>
    </location>
</feature>
<feature type="sequence conflict" description="In Ref. 7; BAG65166." evidence="16" ref="7">
    <original>F</original>
    <variation>L</variation>
    <location>
        <position position="734"/>
    </location>
</feature>
<feature type="helix" evidence="21">
    <location>
        <begin position="336"/>
        <end position="340"/>
    </location>
</feature>
<feature type="helix" evidence="21">
    <location>
        <begin position="342"/>
        <end position="353"/>
    </location>
</feature>
<feature type="helix" evidence="21">
    <location>
        <begin position="357"/>
        <end position="370"/>
    </location>
</feature>
<feature type="helix" evidence="21">
    <location>
        <begin position="375"/>
        <end position="392"/>
    </location>
</feature>
<feature type="helix" evidence="21">
    <location>
        <begin position="395"/>
        <end position="410"/>
    </location>
</feature>
<feature type="strand" evidence="22">
    <location>
        <begin position="411"/>
        <end position="413"/>
    </location>
</feature>
<feature type="helix" evidence="21">
    <location>
        <begin position="416"/>
        <end position="432"/>
    </location>
</feature>
<feature type="helix" evidence="21">
    <location>
        <begin position="436"/>
        <end position="449"/>
    </location>
</feature>
<feature type="helix" evidence="21">
    <location>
        <begin position="454"/>
        <end position="466"/>
    </location>
</feature>
<feature type="helix" evidence="21">
    <location>
        <begin position="470"/>
        <end position="483"/>
    </location>
</feature>
<feature type="helix" evidence="21">
    <location>
        <begin position="488"/>
        <end position="500"/>
    </location>
</feature>
<feature type="helix" evidence="21">
    <location>
        <begin position="504"/>
        <end position="516"/>
    </location>
</feature>
<feature type="helix" evidence="21">
    <location>
        <begin position="525"/>
        <end position="538"/>
    </location>
</feature>
<feature type="helix" evidence="21">
    <location>
        <begin position="543"/>
        <end position="552"/>
    </location>
</feature>
<feature type="strand" evidence="21">
    <location>
        <begin position="557"/>
        <end position="561"/>
    </location>
</feature>
<feature type="strand" evidence="21">
    <location>
        <begin position="574"/>
        <end position="576"/>
    </location>
</feature>
<feature type="helix" evidence="21">
    <location>
        <begin position="578"/>
        <end position="581"/>
    </location>
</feature>
<feature type="helix" evidence="21">
    <location>
        <begin position="584"/>
        <end position="592"/>
    </location>
</feature>
<feature type="helix" evidence="21">
    <location>
        <begin position="594"/>
        <end position="607"/>
    </location>
</feature>
<feature type="helix" evidence="21">
    <location>
        <begin position="609"/>
        <end position="611"/>
    </location>
</feature>
<feature type="strand" evidence="21">
    <location>
        <begin position="612"/>
        <end position="614"/>
    </location>
</feature>
<feature type="turn" evidence="20">
    <location>
        <begin position="617"/>
        <end position="619"/>
    </location>
</feature>
<feature type="strand" evidence="21">
    <location>
        <begin position="620"/>
        <end position="623"/>
    </location>
</feature>
<feature type="strand" evidence="21">
    <location>
        <begin position="625"/>
        <end position="632"/>
    </location>
</feature>
<feature type="helix" evidence="21">
    <location>
        <begin position="638"/>
        <end position="643"/>
    </location>
</feature>
<feature type="helix" evidence="21">
    <location>
        <begin position="645"/>
        <end position="651"/>
    </location>
</feature>
<feature type="helix" evidence="21">
    <location>
        <begin position="655"/>
        <end position="658"/>
    </location>
</feature>
<feature type="strand" evidence="21">
    <location>
        <begin position="664"/>
        <end position="670"/>
    </location>
</feature>
<feature type="strand" evidence="21">
    <location>
        <begin position="674"/>
        <end position="679"/>
    </location>
</feature>
<feature type="strand" evidence="21">
    <location>
        <begin position="686"/>
        <end position="694"/>
    </location>
</feature>
<feature type="strand" evidence="21">
    <location>
        <begin position="697"/>
        <end position="704"/>
    </location>
</feature>
<feature type="strand" evidence="21">
    <location>
        <begin position="707"/>
        <end position="709"/>
    </location>
</feature>
<feature type="strand" evidence="21">
    <location>
        <begin position="716"/>
        <end position="719"/>
    </location>
</feature>
<feature type="strand" evidence="21">
    <location>
        <begin position="725"/>
        <end position="729"/>
    </location>
</feature>
<feature type="strand" evidence="21">
    <location>
        <begin position="731"/>
        <end position="733"/>
    </location>
</feature>
<feature type="strand" evidence="21">
    <location>
        <begin position="735"/>
        <end position="743"/>
    </location>
</feature>
<feature type="helix" evidence="21">
    <location>
        <begin position="749"/>
        <end position="754"/>
    </location>
</feature>
<feature type="glycosylation site" description="N-linked (GlcNAc...) asparagine" evidence="16">
    <location sequence="Q12797-3">
        <position position="64"/>
    </location>
</feature>
<proteinExistence type="evidence at protein level"/>
<sequence>MAQRKNAKSSGNSSSSGSGSGSTSAGSSSPGARRETKHGGHKNGRKGGLSGTSFFTWFMVIALLGVWTSVAVVWFDLVDYEEVLGKLGIYDADGDGDFDVDDAKVLLGLKERSTSEPAVPPEEAEPHTEPEEQVPVEAEPQNIEDEAKEQIQSLLHEMVHAEHVEGEDLQQEDGPTGEPQQEDDEFLMATDVDDRFETLEPEVSHEETEHSYHVEETVSQDCNQDMEEMMSEQENPDSSEPVVEDERLHHDTDDVTYQVYEEQAVYEPLENEGIEITEVTAPPEDNPVEDSQVIVEEVSIFPVEEQQEVPPETNRKTDDPEQKAKVKKKKPKLLNKFDKTIKAELDAAEKLRKRGKIEEAVNAFKELVRKYPQSPRARYGKAQCEDDLAEKRRSNEVLRGAIETYQEVASLPDVPADLLKLSLKRRSDRQQFLGHMRGSLLTLQRLVQLFPNDTSLKNDLGVGYLLIGDNDNAKKVYEEVLSVTPNDGFAKVHYGFILKAQNKIAESIPYLKEGIESGDPGTDDGRFYFHLGDAMQRVGNKEAYKWYELGHKRGHFASVWQRSLYNVNGLKAQPWWTPKETGYTELVKSLERNWKLIRDEGLAVMDKAKGLFLPEDENLREKGDWSQFTLWQQGRRNENACKGAPKTCTLLEKFPETTGCRRGQIKYSIMHPGTHVWPHTGPTNCRLRMHLGLVIPKEGCKIRCANETKTWEEGKVLIFDDSFEHEVWQDASSFRLIFIVDVWHPELTPQQRRSLPAI</sequence>
<name>ASPH_HUMAN</name>
<accession>Q12797</accession>
<accession>A0A0A0MSK8</accession>
<accession>A6NDF4</accession>
<accession>A6NHI2</accession>
<accession>B4DIC9</accession>
<accession>B4E2K4</accession>
<accession>B7ZM95</accession>
<accession>E5RGP5</accession>
<accession>F5H667</accession>
<accession>Q6NXR7</accession>
<accession>Q8TB28</accession>
<accession>Q9H291</accession>
<accession>Q9H2C4</accession>
<accession>Q9NRI0</accession>
<accession>Q9NRI1</accession>
<accession>Q9Y4J0</accession>
<organism>
    <name type="scientific">Homo sapiens</name>
    <name type="common">Human</name>
    <dbReference type="NCBI Taxonomy" id="9606"/>
    <lineage>
        <taxon>Eukaryota</taxon>
        <taxon>Metazoa</taxon>
        <taxon>Chordata</taxon>
        <taxon>Craniata</taxon>
        <taxon>Vertebrata</taxon>
        <taxon>Euteleostomi</taxon>
        <taxon>Mammalia</taxon>
        <taxon>Eutheria</taxon>
        <taxon>Euarchontoglires</taxon>
        <taxon>Primates</taxon>
        <taxon>Haplorrhini</taxon>
        <taxon>Catarrhini</taxon>
        <taxon>Hominidae</taxon>
        <taxon>Homo</taxon>
    </lineage>
</organism>
<reference key="1">
    <citation type="journal article" date="1994" name="Gene">
        <title>Cloning and characterization of the human gene encoding aspartyl beta-hydroxylase.</title>
        <authorList>
            <person name="Korioth F."/>
            <person name="Gieffers C."/>
            <person name="Frey J."/>
        </authorList>
    </citation>
    <scope>NUCLEOTIDE SEQUENCE [MRNA] (ISOFORM 1)</scope>
</reference>
<reference key="2">
    <citation type="journal article" date="1996" name="J. Clin. Invest.">
        <title>Overexpression of human aspartyl(asparaginyl)beta-hydroxylase in hepatocellular carcinoma and cholangiocarcinoma.</title>
        <authorList>
            <person name="Lavaissiere L."/>
            <person name="Jia S."/>
            <person name="Nishiyama M."/>
            <person name="de la Monte S."/>
            <person name="Stern A.M."/>
            <person name="Wands J.R."/>
            <person name="Friedman P.A."/>
        </authorList>
    </citation>
    <scope>NUCLEOTIDE SEQUENCE [MRNA] (ISOFORM 1)</scope>
</reference>
<reference key="3">
    <citation type="journal article" date="2000" name="Gene">
        <title>cDNA cloning and characterization of human cardiac junctin.</title>
        <authorList>
            <person name="Lim K.Y."/>
            <person name="Hong C.-S."/>
            <person name="Kim D.H."/>
        </authorList>
    </citation>
    <scope>NUCLEOTIDE SEQUENCE [MRNA] (ISOFORMS 3 AND 4)</scope>
    <source>
        <tissue>Heart</tissue>
    </source>
</reference>
<reference key="4">
    <citation type="journal article" date="2000" name="J. Biol. Chem.">
        <title>Aspartyl beta -hydroxylase (Asph) and an evolutionarily conserved isoform of Asph missing the catalytic domain share exons with junctin.</title>
        <authorList>
            <person name="Dinchuk J.E."/>
            <person name="Henderson N.L."/>
            <person name="Burn T.C."/>
            <person name="Huber R."/>
            <person name="Ho S.P."/>
            <person name="Link J."/>
            <person name="O'Neil K.T."/>
            <person name="Focht R.J."/>
            <person name="Scully M.S."/>
            <person name="Hollis J.M."/>
            <person name="Hollis G.F."/>
            <person name="Friedman P.A."/>
        </authorList>
    </citation>
    <scope>NUCLEOTIDE SEQUENCE [MRNA] (ISOFORM 2)</scope>
    <source>
        <tissue>Liver</tissue>
    </source>
</reference>
<reference key="5">
    <citation type="journal article" date="2000" name="J. Biol. Chem.">
        <title>Molecular cloning, expression, functional characterization, chromosomal localization, and gene structure of junctate, a novel integral calcium binding protein of sarco(endo)plasmic reticulum membrane.</title>
        <authorList>
            <person name="Treves S."/>
            <person name="Feriotto G."/>
            <person name="Moccagatta L."/>
            <person name="Gambari R."/>
            <person name="Zorzato F."/>
        </authorList>
    </citation>
    <scope>NUCLEOTIDE SEQUENCE [MRNA] (ISOFORM 8)</scope>
    <scope>CALCIUM-BINDING</scope>
    <scope>ALTERNATIVE SPLICING</scope>
    <scope>TISSUE SPECIFICITY</scope>
    <scope>SUBCELLULAR LOCATION</scope>
    <source>
        <tissue>Muscle</tissue>
    </source>
</reference>
<reference key="6">
    <citation type="journal article" date="2000" name="Mol. Genet. Metab.">
        <title>Molecular cloning of junctin from human and developing rabbit heart.</title>
        <authorList>
            <person name="Wetzel G.T."/>
            <person name="Ding S."/>
            <person name="Chen F."/>
        </authorList>
    </citation>
    <scope>NUCLEOTIDE SEQUENCE [MRNA] (ISOFORM 3)</scope>
    <source>
        <tissue>Heart</tissue>
    </source>
</reference>
<reference key="7">
    <citation type="journal article" date="2004" name="Nat. Genet.">
        <title>Complete sequencing and characterization of 21,243 full-length human cDNAs.</title>
        <authorList>
            <person name="Ota T."/>
            <person name="Suzuki Y."/>
            <person name="Nishikawa T."/>
            <person name="Otsuki T."/>
            <person name="Sugiyama T."/>
            <person name="Irie R."/>
            <person name="Wakamatsu A."/>
            <person name="Hayashi K."/>
            <person name="Sato H."/>
            <person name="Nagai K."/>
            <person name="Kimura K."/>
            <person name="Makita H."/>
            <person name="Sekine M."/>
            <person name="Obayashi M."/>
            <person name="Nishi T."/>
            <person name="Shibahara T."/>
            <person name="Tanaka T."/>
            <person name="Ishii S."/>
            <person name="Yamamoto J."/>
            <person name="Saito K."/>
            <person name="Kawai Y."/>
            <person name="Isono Y."/>
            <person name="Nakamura Y."/>
            <person name="Nagahari K."/>
            <person name="Murakami K."/>
            <person name="Yasuda T."/>
            <person name="Iwayanagi T."/>
            <person name="Wagatsuma M."/>
            <person name="Shiratori A."/>
            <person name="Sudo H."/>
            <person name="Hosoiri T."/>
            <person name="Kaku Y."/>
            <person name="Kodaira H."/>
            <person name="Kondo H."/>
            <person name="Sugawara M."/>
            <person name="Takahashi M."/>
            <person name="Kanda K."/>
            <person name="Yokoi T."/>
            <person name="Furuya T."/>
            <person name="Kikkawa E."/>
            <person name="Omura Y."/>
            <person name="Abe K."/>
            <person name="Kamihara K."/>
            <person name="Katsuta N."/>
            <person name="Sato K."/>
            <person name="Tanikawa M."/>
            <person name="Yamazaki M."/>
            <person name="Ninomiya K."/>
            <person name="Ishibashi T."/>
            <person name="Yamashita H."/>
            <person name="Murakawa K."/>
            <person name="Fujimori K."/>
            <person name="Tanai H."/>
            <person name="Kimata M."/>
            <person name="Watanabe M."/>
            <person name="Hiraoka S."/>
            <person name="Chiba Y."/>
            <person name="Ishida S."/>
            <person name="Ono Y."/>
            <person name="Takiguchi S."/>
            <person name="Watanabe S."/>
            <person name="Yosida M."/>
            <person name="Hotuta T."/>
            <person name="Kusano J."/>
            <person name="Kanehori K."/>
            <person name="Takahashi-Fujii A."/>
            <person name="Hara H."/>
            <person name="Tanase T.-O."/>
            <person name="Nomura Y."/>
            <person name="Togiya S."/>
            <person name="Komai F."/>
            <person name="Hara R."/>
            <person name="Takeuchi K."/>
            <person name="Arita M."/>
            <person name="Imose N."/>
            <person name="Musashino K."/>
            <person name="Yuuki H."/>
            <person name="Oshima A."/>
            <person name="Sasaki N."/>
            <person name="Aotsuka S."/>
            <person name="Yoshikawa Y."/>
            <person name="Matsunawa H."/>
            <person name="Ichihara T."/>
            <person name="Shiohata N."/>
            <person name="Sano S."/>
            <person name="Moriya S."/>
            <person name="Momiyama H."/>
            <person name="Satoh N."/>
            <person name="Takami S."/>
            <person name="Terashima Y."/>
            <person name="Suzuki O."/>
            <person name="Nakagawa S."/>
            <person name="Senoh A."/>
            <person name="Mizoguchi H."/>
            <person name="Goto Y."/>
            <person name="Shimizu F."/>
            <person name="Wakebe H."/>
            <person name="Hishigaki H."/>
            <person name="Watanabe T."/>
            <person name="Sugiyama A."/>
            <person name="Takemoto M."/>
            <person name="Kawakami B."/>
            <person name="Yamazaki M."/>
            <person name="Watanabe K."/>
            <person name="Kumagai A."/>
            <person name="Itakura S."/>
            <person name="Fukuzumi Y."/>
            <person name="Fujimori Y."/>
            <person name="Komiyama M."/>
            <person name="Tashiro H."/>
            <person name="Tanigami A."/>
            <person name="Fujiwara T."/>
            <person name="Ono T."/>
            <person name="Yamada K."/>
            <person name="Fujii Y."/>
            <person name="Ozaki K."/>
            <person name="Hirao M."/>
            <person name="Ohmori Y."/>
            <person name="Kawabata A."/>
            <person name="Hikiji T."/>
            <person name="Kobatake N."/>
            <person name="Inagaki H."/>
            <person name="Ikema Y."/>
            <person name="Okamoto S."/>
            <person name="Okitani R."/>
            <person name="Kawakami T."/>
            <person name="Noguchi S."/>
            <person name="Itoh T."/>
            <person name="Shigeta K."/>
            <person name="Senba T."/>
            <person name="Matsumura K."/>
            <person name="Nakajima Y."/>
            <person name="Mizuno T."/>
            <person name="Morinaga M."/>
            <person name="Sasaki M."/>
            <person name="Togashi T."/>
            <person name="Oyama M."/>
            <person name="Hata H."/>
            <person name="Watanabe M."/>
            <person name="Komatsu T."/>
            <person name="Mizushima-Sugano J."/>
            <person name="Satoh T."/>
            <person name="Shirai Y."/>
            <person name="Takahashi Y."/>
            <person name="Nakagawa K."/>
            <person name="Okumura K."/>
            <person name="Nagase T."/>
            <person name="Nomura N."/>
            <person name="Kikuchi H."/>
            <person name="Masuho Y."/>
            <person name="Yamashita R."/>
            <person name="Nakai K."/>
            <person name="Yada T."/>
            <person name="Nakamura Y."/>
            <person name="Ohara O."/>
            <person name="Isogai T."/>
            <person name="Sugano S."/>
        </authorList>
    </citation>
    <scope>NUCLEOTIDE SEQUENCE [LARGE SCALE MRNA] (ISOFORMS 9 AND 10)</scope>
    <source>
        <tissue>Hippocampus</tissue>
        <tissue>Trachea</tissue>
    </source>
</reference>
<reference key="8">
    <citation type="journal article" date="2006" name="Nature">
        <title>DNA sequence and analysis of human chromosome 8.</title>
        <authorList>
            <person name="Nusbaum C."/>
            <person name="Mikkelsen T.S."/>
            <person name="Zody M.C."/>
            <person name="Asakawa S."/>
            <person name="Taudien S."/>
            <person name="Garber M."/>
            <person name="Kodira C.D."/>
            <person name="Schueler M.G."/>
            <person name="Shimizu A."/>
            <person name="Whittaker C.A."/>
            <person name="Chang J.L."/>
            <person name="Cuomo C.A."/>
            <person name="Dewar K."/>
            <person name="FitzGerald M.G."/>
            <person name="Yang X."/>
            <person name="Allen N.R."/>
            <person name="Anderson S."/>
            <person name="Asakawa T."/>
            <person name="Blechschmidt K."/>
            <person name="Bloom T."/>
            <person name="Borowsky M.L."/>
            <person name="Butler J."/>
            <person name="Cook A."/>
            <person name="Corum B."/>
            <person name="DeArellano K."/>
            <person name="DeCaprio D."/>
            <person name="Dooley K.T."/>
            <person name="Dorris L. III"/>
            <person name="Engels R."/>
            <person name="Gloeckner G."/>
            <person name="Hafez N."/>
            <person name="Hagopian D.S."/>
            <person name="Hall J.L."/>
            <person name="Ishikawa S.K."/>
            <person name="Jaffe D.B."/>
            <person name="Kamat A."/>
            <person name="Kudoh J."/>
            <person name="Lehmann R."/>
            <person name="Lokitsang T."/>
            <person name="Macdonald P."/>
            <person name="Major J.E."/>
            <person name="Matthews C.D."/>
            <person name="Mauceli E."/>
            <person name="Menzel U."/>
            <person name="Mihalev A.H."/>
            <person name="Minoshima S."/>
            <person name="Murayama Y."/>
            <person name="Naylor J.W."/>
            <person name="Nicol R."/>
            <person name="Nguyen C."/>
            <person name="O'Leary S.B."/>
            <person name="O'Neill K."/>
            <person name="Parker S.C.J."/>
            <person name="Polley A."/>
            <person name="Raymond C.K."/>
            <person name="Reichwald K."/>
            <person name="Rodriguez J."/>
            <person name="Sasaki T."/>
            <person name="Schilhabel M."/>
            <person name="Siddiqui R."/>
            <person name="Smith C.L."/>
            <person name="Sneddon T.P."/>
            <person name="Talamas J.A."/>
            <person name="Tenzin P."/>
            <person name="Topham K."/>
            <person name="Venkataraman V."/>
            <person name="Wen G."/>
            <person name="Yamazaki S."/>
            <person name="Young S.K."/>
            <person name="Zeng Q."/>
            <person name="Zimmer A.R."/>
            <person name="Rosenthal A."/>
            <person name="Birren B.W."/>
            <person name="Platzer M."/>
            <person name="Shimizu N."/>
            <person name="Lander E.S."/>
        </authorList>
    </citation>
    <scope>NUCLEOTIDE SEQUENCE [LARGE SCALE GENOMIC DNA]</scope>
</reference>
<reference key="9">
    <citation type="submission" date="2005-07" db="EMBL/GenBank/DDBJ databases">
        <authorList>
            <person name="Mural R.J."/>
            <person name="Istrail S."/>
            <person name="Sutton G.G."/>
            <person name="Florea L."/>
            <person name="Halpern A.L."/>
            <person name="Mobarry C.M."/>
            <person name="Lippert R."/>
            <person name="Walenz B."/>
            <person name="Shatkay H."/>
            <person name="Dew I."/>
            <person name="Miller J.R."/>
            <person name="Flanigan M.J."/>
            <person name="Edwards N.J."/>
            <person name="Bolanos R."/>
            <person name="Fasulo D."/>
            <person name="Halldorsson B.V."/>
            <person name="Hannenhalli S."/>
            <person name="Turner R."/>
            <person name="Yooseph S."/>
            <person name="Lu F."/>
            <person name="Nusskern D.R."/>
            <person name="Shue B.C."/>
            <person name="Zheng X.H."/>
            <person name="Zhong F."/>
            <person name="Delcher A.L."/>
            <person name="Huson D.H."/>
            <person name="Kravitz S.A."/>
            <person name="Mouchard L."/>
            <person name="Reinert K."/>
            <person name="Remington K.A."/>
            <person name="Clark A.G."/>
            <person name="Waterman M.S."/>
            <person name="Eichler E.E."/>
            <person name="Adams M.D."/>
            <person name="Hunkapiller M.W."/>
            <person name="Myers E.W."/>
            <person name="Venter J.C."/>
        </authorList>
    </citation>
    <scope>NUCLEOTIDE SEQUENCE [LARGE SCALE GENOMIC DNA]</scope>
</reference>
<reference key="10">
    <citation type="journal article" date="2004" name="Genome Res.">
        <title>The status, quality, and expansion of the NIH full-length cDNA project: the Mammalian Gene Collection (MGC).</title>
        <authorList>
            <consortium name="The MGC Project Team"/>
        </authorList>
    </citation>
    <scope>NUCLEOTIDE SEQUENCE [LARGE SCALE MRNA] (ISOFORMS 5; 6 AND 7)</scope>
    <source>
        <tissue>Brain</tissue>
        <tissue>Pancreatic carcinoma</tissue>
    </source>
</reference>
<reference key="11">
    <citation type="journal article" date="2010" name="Sci. Signal.">
        <title>Quantitative phosphoproteomics reveals widespread full phosphorylation site occupancy during mitosis.</title>
        <authorList>
            <person name="Olsen J.V."/>
            <person name="Vermeulen M."/>
            <person name="Santamaria A."/>
            <person name="Kumar C."/>
            <person name="Miller M.L."/>
            <person name="Jensen L.J."/>
            <person name="Gnad F."/>
            <person name="Cox J."/>
            <person name="Jensen T.S."/>
            <person name="Nigg E.A."/>
            <person name="Brunak S."/>
            <person name="Mann M."/>
        </authorList>
    </citation>
    <scope>IDENTIFICATION BY MASS SPECTROMETRY [LARGE SCALE ANALYSIS]</scope>
    <source>
        <tissue>Cervix carcinoma</tissue>
    </source>
</reference>
<reference key="12">
    <citation type="journal article" date="2011" name="BMC Syst. Biol.">
        <title>Initial characterization of the human central proteome.</title>
        <authorList>
            <person name="Burkard T.R."/>
            <person name="Planyavsky M."/>
            <person name="Kaupe I."/>
            <person name="Breitwieser F.P."/>
            <person name="Buerckstuemmer T."/>
            <person name="Bennett K.L."/>
            <person name="Superti-Furga G."/>
            <person name="Colinge J."/>
        </authorList>
    </citation>
    <scope>IDENTIFICATION BY MASS SPECTROMETRY [LARGE SCALE ANALYSIS]</scope>
</reference>
<reference key="13">
    <citation type="journal article" date="2012" name="Proc. Natl. Acad. Sci. U.S.A.">
        <title>Junctate is a Ca2+-sensing structural component of Orai1 and stromal interaction molecule 1 (STIM1).</title>
        <authorList>
            <person name="Srikanth S."/>
            <person name="Jew M."/>
            <person name="Kim K.D."/>
            <person name="Yee M.K."/>
            <person name="Abramson J."/>
            <person name="Gwack Y."/>
        </authorList>
    </citation>
    <scope>FUNCTION</scope>
    <scope>CALCIUM-BINDING DOMAIN</scope>
    <scope>INTERACTION WITH ORAI1 AND STIM1 (ISOFORM 8)</scope>
    <scope>MUTAGENESIS OF 91-ASP--ASP-93</scope>
    <scope>SUBCELLULAR LOCATION</scope>
</reference>
<reference key="14">
    <citation type="journal article" date="2009" name="J. Proteome Res.">
        <title>Glycoproteomics analysis of human liver tissue by combination of multiple enzyme digestion and hydrazide chemistry.</title>
        <authorList>
            <person name="Chen R."/>
            <person name="Jiang X."/>
            <person name="Sun D."/>
            <person name="Han G."/>
            <person name="Wang F."/>
            <person name="Ye M."/>
            <person name="Wang L."/>
            <person name="Zou H."/>
        </authorList>
    </citation>
    <scope>GLYCOSYLATION [LARGE SCALE ANALYSIS] AT ASN-452</scope>
    <scope>GLYCOSYLATION [LARGE SCALE ANALYSIS] AT ASN-64 (ISOFORM 3)</scope>
    <source>
        <tissue>Liver</tissue>
    </source>
</reference>
<reference key="15">
    <citation type="journal article" date="2004" name="Cardiovasc. Res.">
        <title>Calsequestrin mutant D307H exhibits depressed binding to its protein targets and a depressed response to calcium.</title>
        <authorList>
            <person name="Houle T.D."/>
            <person name="Ram M.L."/>
            <person name="Cala S.E."/>
        </authorList>
    </citation>
    <scope>INTERACTION WITH CASQ2 (ISOFORM 4)</scope>
    <scope>SUBCELLULAR LOCATION</scope>
</reference>
<reference key="16">
    <citation type="journal article" date="2002" name="J. Biol. Chem.">
        <title>Absence of post-translational aspartyl beta-hydroxylation of epidermal growth factor domains in mice leads to developmental defects and an increased incidence of intestinal neoplasia.</title>
        <authorList>
            <person name="Dinchuk J.E."/>
            <person name="Focht R.J."/>
            <person name="Kelley J.A."/>
            <person name="Henderson N.L."/>
            <person name="Zolotarjova N.I."/>
            <person name="Wynn R."/>
            <person name="Neff N.T."/>
            <person name="Link J."/>
            <person name="Huber R.M."/>
            <person name="Burn T.C."/>
            <person name="Rupar M.J."/>
            <person name="Cunningham M.R."/>
            <person name="Selling B.H."/>
            <person name="Ma J."/>
            <person name="Stern A.A."/>
            <person name="Hollis G.F."/>
            <person name="Stein R.B."/>
            <person name="Friedman P.A."/>
        </authorList>
    </citation>
    <scope>FUNCTION (ISOFORM 1)</scope>
    <scope>CATALYTIC ACTIVITY</scope>
</reference>
<reference key="17">
    <citation type="journal article" date="2014" name="J. Proteomics">
        <title>An enzyme assisted RP-RPLC approach for in-depth analysis of human liver phosphoproteome.</title>
        <authorList>
            <person name="Bian Y."/>
            <person name="Song C."/>
            <person name="Cheng K."/>
            <person name="Dong M."/>
            <person name="Wang F."/>
            <person name="Huang J."/>
            <person name="Sun D."/>
            <person name="Wang L."/>
            <person name="Ye M."/>
            <person name="Zou H."/>
        </authorList>
    </citation>
    <scope>PHOSPHORYLATION [LARGE SCALE ANALYSIS] AT SER-14</scope>
    <scope>IDENTIFICATION BY MASS SPECTROMETRY [LARGE SCALE ANALYSIS]</scope>
    <source>
        <tissue>Liver</tissue>
    </source>
</reference>
<reference key="18">
    <citation type="submission" date="2011-05" db="PDB data bank">
        <title>Crystal structure of human aspartate beta-hydroxylase isoform A.</title>
        <authorList>
            <consortium name="Structural genomics consortium (SGC)"/>
        </authorList>
    </citation>
    <scope>X-RAY CRYSTALLOGRAPHY (2.05 ANGSTROMS) OF 562-758 IN COMPLEX WITH N-OXALYOLGLYCINE AND ZINC IONS</scope>
    <scope>DISULFIDE BOND</scope>
</reference>
<reference key="19">
    <citation type="journal article" date="2014" name="Am. J. Hum. Genet.">
        <title>Mutations in ASPH cause facial dysmorphism, lens dislocation, anterior-segment abnormalities, and spontaneous filtering blebs, or Traboulsi syndrome.</title>
        <authorList>
            <person name="Patel N."/>
            <person name="Khan A.O."/>
            <person name="Mansour A."/>
            <person name="Mohamed J.Y."/>
            <person name="Al-Assiri A."/>
            <person name="Haddad R."/>
            <person name="Jia X."/>
            <person name="Xiong Y."/>
            <person name="Megarbane A."/>
            <person name="Traboulsi E.I."/>
            <person name="Alkuraya F.S."/>
        </authorList>
    </citation>
    <scope>INVOLVEMENT IN FDLAB</scope>
    <scope>VARIANT FDLAB TRP-735</scope>
</reference>
<protein>
    <recommendedName>
        <fullName>Aspartyl/asparaginyl beta-hydroxylase</fullName>
        <ecNumber evidence="5">1.14.11.16</ecNumber>
    </recommendedName>
    <alternativeName>
        <fullName>Aspartate beta-hydroxylase</fullName>
        <shortName>ASP beta-hydroxylase</shortName>
    </alternativeName>
    <alternativeName>
        <fullName>Peptide-aspartate beta-dioxygenase</fullName>
    </alternativeName>
</protein>